<name>LYN_HUMAN</name>
<evidence type="ECO:0000250" key="1">
    <source>
        <dbReference type="UniProtKB" id="P25911"/>
    </source>
</evidence>
<evidence type="ECO:0000255" key="2">
    <source>
        <dbReference type="PROSITE-ProRule" id="PRU00159"/>
    </source>
</evidence>
<evidence type="ECO:0000255" key="3">
    <source>
        <dbReference type="PROSITE-ProRule" id="PRU00191"/>
    </source>
</evidence>
<evidence type="ECO:0000255" key="4">
    <source>
        <dbReference type="PROSITE-ProRule" id="PRU00192"/>
    </source>
</evidence>
<evidence type="ECO:0000255" key="5">
    <source>
        <dbReference type="PROSITE-ProRule" id="PRU10028"/>
    </source>
</evidence>
<evidence type="ECO:0000256" key="6">
    <source>
        <dbReference type="SAM" id="MobiDB-lite"/>
    </source>
</evidence>
<evidence type="ECO:0000269" key="7">
    <source>
    </source>
</evidence>
<evidence type="ECO:0000269" key="8">
    <source>
    </source>
</evidence>
<evidence type="ECO:0000269" key="9">
    <source>
    </source>
</evidence>
<evidence type="ECO:0000269" key="10">
    <source>
    </source>
</evidence>
<evidence type="ECO:0000269" key="11">
    <source>
    </source>
</evidence>
<evidence type="ECO:0000269" key="12">
    <source>
    </source>
</evidence>
<evidence type="ECO:0000269" key="13">
    <source>
    </source>
</evidence>
<evidence type="ECO:0000269" key="14">
    <source>
    </source>
</evidence>
<evidence type="ECO:0000269" key="15">
    <source>
    </source>
</evidence>
<evidence type="ECO:0000269" key="16">
    <source>
    </source>
</evidence>
<evidence type="ECO:0000269" key="17">
    <source>
    </source>
</evidence>
<evidence type="ECO:0000269" key="18">
    <source>
    </source>
</evidence>
<evidence type="ECO:0000269" key="19">
    <source>
    </source>
</evidence>
<evidence type="ECO:0000269" key="20">
    <source>
    </source>
</evidence>
<evidence type="ECO:0000269" key="21">
    <source>
    </source>
</evidence>
<evidence type="ECO:0000269" key="22">
    <source>
    </source>
</evidence>
<evidence type="ECO:0000269" key="23">
    <source>
    </source>
</evidence>
<evidence type="ECO:0000269" key="24">
    <source>
    </source>
</evidence>
<evidence type="ECO:0000269" key="25">
    <source>
    </source>
</evidence>
<evidence type="ECO:0000269" key="26">
    <source>
    </source>
</evidence>
<evidence type="ECO:0000269" key="27">
    <source>
    </source>
</evidence>
<evidence type="ECO:0000269" key="28">
    <source>
    </source>
</evidence>
<evidence type="ECO:0000269" key="29">
    <source>
    </source>
</evidence>
<evidence type="ECO:0000269" key="30">
    <source>
    </source>
</evidence>
<evidence type="ECO:0000269" key="31">
    <source>
    </source>
</evidence>
<evidence type="ECO:0000269" key="32">
    <source>
    </source>
</evidence>
<evidence type="ECO:0000269" key="33">
    <source>
    </source>
</evidence>
<evidence type="ECO:0000269" key="34">
    <source>
    </source>
</evidence>
<evidence type="ECO:0000269" key="35">
    <source>
    </source>
</evidence>
<evidence type="ECO:0000269" key="36">
    <source>
    </source>
</evidence>
<evidence type="ECO:0000269" key="37">
    <source>
    </source>
</evidence>
<evidence type="ECO:0000269" key="38">
    <source>
    </source>
</evidence>
<evidence type="ECO:0000269" key="39">
    <source>
    </source>
</evidence>
<evidence type="ECO:0000269" key="40">
    <source>
    </source>
</evidence>
<evidence type="ECO:0000269" key="41">
    <source>
    </source>
</evidence>
<evidence type="ECO:0000269" key="42">
    <source>
    </source>
</evidence>
<evidence type="ECO:0000269" key="43">
    <source>
    </source>
</evidence>
<evidence type="ECO:0000269" key="44">
    <source>
    </source>
</evidence>
<evidence type="ECO:0000269" key="45">
    <source>
    </source>
</evidence>
<evidence type="ECO:0000269" key="46">
    <source>
    </source>
</evidence>
<evidence type="ECO:0000269" key="47">
    <source>
    </source>
</evidence>
<evidence type="ECO:0000269" key="48">
    <source>
    </source>
</evidence>
<evidence type="ECO:0000269" key="49">
    <source>
    </source>
</evidence>
<evidence type="ECO:0000269" key="50">
    <source>
    </source>
</evidence>
<evidence type="ECO:0000269" key="51">
    <source>
    </source>
</evidence>
<evidence type="ECO:0000269" key="52">
    <source>
    </source>
</evidence>
<evidence type="ECO:0000269" key="53">
    <source>
    </source>
</evidence>
<evidence type="ECO:0000269" key="54">
    <source>
    </source>
</evidence>
<evidence type="ECO:0000269" key="55">
    <source ref="67"/>
</evidence>
<evidence type="ECO:0000303" key="56">
    <source>
    </source>
</evidence>
<evidence type="ECO:0000305" key="57"/>
<evidence type="ECO:0000305" key="58">
    <source>
    </source>
</evidence>
<evidence type="ECO:0007744" key="59">
    <source>
    </source>
</evidence>
<evidence type="ECO:0007744" key="60">
    <source>
    </source>
</evidence>
<evidence type="ECO:0007744" key="61">
    <source>
    </source>
</evidence>
<evidence type="ECO:0007744" key="62">
    <source>
    </source>
</evidence>
<evidence type="ECO:0007744" key="63">
    <source>
    </source>
</evidence>
<evidence type="ECO:0007744" key="64">
    <source>
    </source>
</evidence>
<evidence type="ECO:0007744" key="65">
    <source>
    </source>
</evidence>
<evidence type="ECO:0007829" key="66">
    <source>
        <dbReference type="PDB" id="1W1F"/>
    </source>
</evidence>
<evidence type="ECO:0007829" key="67">
    <source>
        <dbReference type="PDB" id="5XY1"/>
    </source>
</evidence>
<evidence type="ECO:0007829" key="68">
    <source>
        <dbReference type="PDB" id="6NMW"/>
    </source>
</evidence>
<dbReference type="EC" id="2.7.10.2"/>
<dbReference type="EMBL" id="M16038">
    <property type="protein sequence ID" value="AAA59540.1"/>
    <property type="molecule type" value="mRNA"/>
</dbReference>
<dbReference type="EMBL" id="M79321">
    <property type="protein sequence ID" value="AAB50019.1"/>
    <property type="molecule type" value="mRNA"/>
</dbReference>
<dbReference type="EMBL" id="BC075001">
    <property type="protein sequence ID" value="AAH75001.1"/>
    <property type="molecule type" value="mRNA"/>
</dbReference>
<dbReference type="EMBL" id="BC075002">
    <property type="protein sequence ID" value="AAH75002.1"/>
    <property type="molecule type" value="mRNA"/>
</dbReference>
<dbReference type="EMBL" id="BC126456">
    <property type="protein sequence ID" value="AAI26457.1"/>
    <property type="molecule type" value="mRNA"/>
</dbReference>
<dbReference type="EMBL" id="BC126458">
    <property type="protein sequence ID" value="AAI26459.1"/>
    <property type="molecule type" value="mRNA"/>
</dbReference>
<dbReference type="CCDS" id="CCDS47859.1">
    <molecule id="P07948-2"/>
</dbReference>
<dbReference type="CCDS" id="CCDS6162.1">
    <molecule id="P07948-1"/>
</dbReference>
<dbReference type="PIR" id="A26719">
    <property type="entry name" value="TVHULY"/>
</dbReference>
<dbReference type="RefSeq" id="NP_001104567.1">
    <molecule id="P07948-2"/>
    <property type="nucleotide sequence ID" value="NM_001111097.3"/>
</dbReference>
<dbReference type="RefSeq" id="NP_002341.1">
    <molecule id="P07948-1"/>
    <property type="nucleotide sequence ID" value="NM_002350.4"/>
</dbReference>
<dbReference type="RefSeq" id="XP_016868905.1">
    <property type="nucleotide sequence ID" value="XM_017013416.1"/>
</dbReference>
<dbReference type="PDB" id="1W1F">
    <property type="method" value="NMR"/>
    <property type="chains" value="A=61-123"/>
</dbReference>
<dbReference type="PDB" id="1WA7">
    <property type="method" value="NMR"/>
    <property type="chains" value="A=61-123"/>
</dbReference>
<dbReference type="PDB" id="3A4O">
    <property type="method" value="X-ray"/>
    <property type="resolution" value="3.00 A"/>
    <property type="chains" value="X=233-512"/>
</dbReference>
<dbReference type="PDB" id="5XY1">
    <property type="method" value="X-ray"/>
    <property type="resolution" value="2.70 A"/>
    <property type="chains" value="A=239-512"/>
</dbReference>
<dbReference type="PDB" id="6NMW">
    <property type="method" value="X-ray"/>
    <property type="resolution" value="1.20 A"/>
    <property type="chains" value="A=63-125"/>
</dbReference>
<dbReference type="PDB" id="8WFF">
    <property type="method" value="X-ray"/>
    <property type="resolution" value="1.30 A"/>
    <property type="chains" value="A=63-125"/>
</dbReference>
<dbReference type="PDBsum" id="1W1F"/>
<dbReference type="PDBsum" id="1WA7"/>
<dbReference type="PDBsum" id="3A4O"/>
<dbReference type="PDBsum" id="5XY1"/>
<dbReference type="PDBsum" id="6NMW"/>
<dbReference type="PDBsum" id="8WFF"/>
<dbReference type="BMRB" id="P07948"/>
<dbReference type="SMR" id="P07948"/>
<dbReference type="BioGRID" id="110245">
    <property type="interactions" value="734"/>
</dbReference>
<dbReference type="CORUM" id="P07948"/>
<dbReference type="DIP" id="DIP-1056N"/>
<dbReference type="ELM" id="P07948"/>
<dbReference type="FunCoup" id="P07948">
    <property type="interactions" value="1717"/>
</dbReference>
<dbReference type="IntAct" id="P07948">
    <property type="interactions" value="166"/>
</dbReference>
<dbReference type="MINT" id="P07948"/>
<dbReference type="STRING" id="9606.ENSP00000428924"/>
<dbReference type="BindingDB" id="P07948"/>
<dbReference type="ChEMBL" id="CHEMBL3905"/>
<dbReference type="DrugBank" id="DB03023">
    <property type="generic name" value="1-Tert-Butyl-3-(4-Chloro-Phenyl)-1h-Pyrazolo[3,4-D]Pyrimidin-4-Ylamine"/>
</dbReference>
<dbReference type="DrugBank" id="DB11851">
    <property type="generic name" value="Bafetinib"/>
</dbReference>
<dbReference type="DrugBank" id="DB06616">
    <property type="generic name" value="Bosutinib"/>
</dbReference>
<dbReference type="DrugBank" id="DB01254">
    <property type="generic name" value="Dasatinib"/>
</dbReference>
<dbReference type="DrugBank" id="DB12010">
    <property type="generic name" value="Fostamatinib"/>
</dbReference>
<dbReference type="DrugBank" id="DB09079">
    <property type="generic name" value="Nintedanib"/>
</dbReference>
<dbReference type="DrugBank" id="DB08901">
    <property type="generic name" value="Ponatinib"/>
</dbReference>
<dbReference type="DrugCentral" id="P07948"/>
<dbReference type="GuidetoPHARMACOLOGY" id="2060"/>
<dbReference type="iPTMnet" id="P07948"/>
<dbReference type="PhosphoSitePlus" id="P07948"/>
<dbReference type="SwissPalm" id="P07948"/>
<dbReference type="BioMuta" id="LYN"/>
<dbReference type="DMDM" id="125480"/>
<dbReference type="REPRODUCTION-2DPAGE" id="P07948"/>
<dbReference type="CPTAC" id="CPTAC-2785"/>
<dbReference type="jPOST" id="P07948"/>
<dbReference type="MassIVE" id="P07948"/>
<dbReference type="PaxDb" id="9606-ENSP00000428924"/>
<dbReference type="PeptideAtlas" id="P07948"/>
<dbReference type="ProteomicsDB" id="52045">
    <molecule id="P07948-1"/>
</dbReference>
<dbReference type="ProteomicsDB" id="52046">
    <molecule id="P07948-2"/>
</dbReference>
<dbReference type="Pumba" id="P07948"/>
<dbReference type="ABCD" id="P07948">
    <property type="antibodies" value="11 sequenced antibodies"/>
</dbReference>
<dbReference type="Antibodypedia" id="51187">
    <property type="antibodies" value="926 antibodies from 45 providers"/>
</dbReference>
<dbReference type="DNASU" id="4067"/>
<dbReference type="Ensembl" id="ENST00000519728.6">
    <molecule id="P07948-1"/>
    <property type="protein sequence ID" value="ENSP00000428924.1"/>
    <property type="gene ID" value="ENSG00000254087.8"/>
</dbReference>
<dbReference type="Ensembl" id="ENST00000520220.6">
    <molecule id="P07948-2"/>
    <property type="protein sequence ID" value="ENSP00000428424.1"/>
    <property type="gene ID" value="ENSG00000254087.8"/>
</dbReference>
<dbReference type="GeneID" id="4067"/>
<dbReference type="KEGG" id="hsa:4067"/>
<dbReference type="MANE-Select" id="ENST00000519728.6">
    <property type="protein sequence ID" value="ENSP00000428924.1"/>
    <property type="RefSeq nucleotide sequence ID" value="NM_002350.4"/>
    <property type="RefSeq protein sequence ID" value="NP_002341.1"/>
</dbReference>
<dbReference type="UCSC" id="uc003xsk.5">
    <molecule id="P07948-1"/>
    <property type="organism name" value="human"/>
</dbReference>
<dbReference type="AGR" id="HGNC:6735"/>
<dbReference type="CTD" id="4067"/>
<dbReference type="DisGeNET" id="4067"/>
<dbReference type="GeneCards" id="LYN"/>
<dbReference type="HGNC" id="HGNC:6735">
    <property type="gene designation" value="LYN"/>
</dbReference>
<dbReference type="HPA" id="ENSG00000254087">
    <property type="expression patterns" value="Tissue enhanced (bone marrow, lymphoid tissue)"/>
</dbReference>
<dbReference type="MalaCards" id="LYN"/>
<dbReference type="MIM" id="165120">
    <property type="type" value="gene"/>
</dbReference>
<dbReference type="MIM" id="620376">
    <property type="type" value="phenotype"/>
</dbReference>
<dbReference type="neXtProt" id="NX_P07948"/>
<dbReference type="OpenTargets" id="ENSG00000254087"/>
<dbReference type="PharmGKB" id="PA30498"/>
<dbReference type="VEuPathDB" id="HostDB:ENSG00000254087"/>
<dbReference type="eggNOG" id="KOG0197">
    <property type="taxonomic scope" value="Eukaryota"/>
</dbReference>
<dbReference type="GeneTree" id="ENSGT00940000158011"/>
<dbReference type="HOGENOM" id="CLU_000288_7_2_1"/>
<dbReference type="InParanoid" id="P07948"/>
<dbReference type="OMA" id="TGNMGCI"/>
<dbReference type="OrthoDB" id="4062651at2759"/>
<dbReference type="PAN-GO" id="P07948">
    <property type="GO annotations" value="18 GO annotations based on evolutionary models"/>
</dbReference>
<dbReference type="PhylomeDB" id="P07948"/>
<dbReference type="TreeFam" id="TF351634"/>
<dbReference type="BRENDA" id="2.7.10.2">
    <property type="organism ID" value="2681"/>
</dbReference>
<dbReference type="PathwayCommons" id="P07948"/>
<dbReference type="Reactome" id="R-HSA-114604">
    <property type="pathway name" value="GPVI-mediated activation cascade"/>
</dbReference>
<dbReference type="Reactome" id="R-HSA-1433557">
    <property type="pathway name" value="Signaling by SCF-KIT"/>
</dbReference>
<dbReference type="Reactome" id="R-HSA-1433559">
    <property type="pathway name" value="Regulation of KIT signaling"/>
</dbReference>
<dbReference type="Reactome" id="R-HSA-202733">
    <property type="pathway name" value="Cell surface interactions at the vascular wall"/>
</dbReference>
<dbReference type="Reactome" id="R-HSA-2029481">
    <property type="pathway name" value="FCGR activation"/>
</dbReference>
<dbReference type="Reactome" id="R-HSA-210990">
    <property type="pathway name" value="PECAM1 interactions"/>
</dbReference>
<dbReference type="Reactome" id="R-HSA-2454202">
    <property type="pathway name" value="Fc epsilon receptor (FCERI) signaling"/>
</dbReference>
<dbReference type="Reactome" id="R-HSA-2682334">
    <property type="pathway name" value="EPH-Ephrin signaling"/>
</dbReference>
<dbReference type="Reactome" id="R-HSA-2730905">
    <property type="pathway name" value="Role of LAT2/NTAL/LAB on calcium mobilization"/>
</dbReference>
<dbReference type="Reactome" id="R-HSA-2871796">
    <property type="pathway name" value="FCERI mediated MAPK activation"/>
</dbReference>
<dbReference type="Reactome" id="R-HSA-2871809">
    <property type="pathway name" value="FCERI mediated Ca+2 mobilization"/>
</dbReference>
<dbReference type="Reactome" id="R-HSA-2871837">
    <property type="pathway name" value="FCERI mediated NF-kB activation"/>
</dbReference>
<dbReference type="Reactome" id="R-HSA-389356">
    <property type="pathway name" value="Co-stimulation by CD28"/>
</dbReference>
<dbReference type="Reactome" id="R-HSA-389513">
    <property type="pathway name" value="Co-inhibition by CTLA4"/>
</dbReference>
<dbReference type="Reactome" id="R-HSA-3928662">
    <property type="pathway name" value="EPHB-mediated forward signaling"/>
</dbReference>
<dbReference type="Reactome" id="R-HSA-3928663">
    <property type="pathway name" value="EPHA-mediated growth cone collapse"/>
</dbReference>
<dbReference type="Reactome" id="R-HSA-3928665">
    <property type="pathway name" value="EPH-ephrin mediated repulsion of cells"/>
</dbReference>
<dbReference type="Reactome" id="R-HSA-5621480">
    <property type="pathway name" value="Dectin-2 family"/>
</dbReference>
<dbReference type="Reactome" id="R-HSA-5621575">
    <property type="pathway name" value="CD209 (DC-SIGN) signaling"/>
</dbReference>
<dbReference type="Reactome" id="R-HSA-5690714">
    <property type="pathway name" value="CD22 mediated BCR regulation"/>
</dbReference>
<dbReference type="Reactome" id="R-HSA-69231">
    <property type="pathway name" value="Cyclin D associated events in G1"/>
</dbReference>
<dbReference type="Reactome" id="R-HSA-75892">
    <property type="pathway name" value="Platelet Adhesion to exposed collagen"/>
</dbReference>
<dbReference type="Reactome" id="R-HSA-9006335">
    <property type="pathway name" value="Signaling by Erythropoietin"/>
</dbReference>
<dbReference type="Reactome" id="R-HSA-9027276">
    <property type="pathway name" value="Erythropoietin activates Phosphoinositide-3-kinase (PI3K)"/>
</dbReference>
<dbReference type="Reactome" id="R-HSA-9027277">
    <property type="pathway name" value="Erythropoietin activates Phospholipase C gamma (PLCG)"/>
</dbReference>
<dbReference type="Reactome" id="R-HSA-9027283">
    <property type="pathway name" value="Erythropoietin activates STAT5"/>
</dbReference>
<dbReference type="Reactome" id="R-HSA-9027284">
    <property type="pathway name" value="Erythropoietin activates RAS"/>
</dbReference>
<dbReference type="Reactome" id="R-HSA-912631">
    <property type="pathway name" value="Regulation of signaling by CBL"/>
</dbReference>
<dbReference type="Reactome" id="R-HSA-9664323">
    <property type="pathway name" value="FCGR3A-mediated IL10 synthesis"/>
</dbReference>
<dbReference type="Reactome" id="R-HSA-9664422">
    <property type="pathway name" value="FCGR3A-mediated phagocytosis"/>
</dbReference>
<dbReference type="Reactome" id="R-HSA-9670439">
    <property type="pathway name" value="Signaling by phosphorylated juxtamembrane, extracellular and kinase domain KIT mutants"/>
</dbReference>
<dbReference type="Reactome" id="R-HSA-9674555">
    <property type="pathway name" value="Signaling by CSF3 (G-CSF)"/>
</dbReference>
<dbReference type="Reactome" id="R-HSA-9680350">
    <property type="pathway name" value="Signaling by CSF1 (M-CSF) in myeloid cells"/>
</dbReference>
<dbReference type="Reactome" id="R-HSA-9705462">
    <property type="pathway name" value="Inactivation of CSF3 (G-CSF) signaling"/>
</dbReference>
<dbReference type="Reactome" id="R-HSA-982772">
    <property type="pathway name" value="Growth hormone receptor signaling"/>
</dbReference>
<dbReference type="Reactome" id="R-HSA-983695">
    <property type="pathway name" value="Antigen activates B Cell Receptor (BCR) leading to generation of second messengers"/>
</dbReference>
<dbReference type="SignaLink" id="P07948"/>
<dbReference type="SIGNOR" id="P07948"/>
<dbReference type="BioGRID-ORCS" id="4067">
    <property type="hits" value="24 hits in 1216 CRISPR screens"/>
</dbReference>
<dbReference type="ChiTaRS" id="LYN">
    <property type="organism name" value="human"/>
</dbReference>
<dbReference type="EvolutionaryTrace" id="P07948"/>
<dbReference type="GeneWiki" id="LYN"/>
<dbReference type="GenomeRNAi" id="4067"/>
<dbReference type="Pharos" id="P07948">
    <property type="development level" value="Tclin"/>
</dbReference>
<dbReference type="PRO" id="PR:P07948"/>
<dbReference type="Proteomes" id="UP000005640">
    <property type="component" value="Chromosome 8"/>
</dbReference>
<dbReference type="RNAct" id="P07948">
    <property type="molecule type" value="protein"/>
</dbReference>
<dbReference type="Bgee" id="ENSG00000254087">
    <property type="expression patterns" value="Expressed in monocyte and 189 other cell types or tissues"/>
</dbReference>
<dbReference type="ExpressionAtlas" id="P07948">
    <property type="expression patterns" value="baseline and differential"/>
</dbReference>
<dbReference type="GO" id="GO:0005912">
    <property type="term" value="C:adherens junction"/>
    <property type="evidence" value="ECO:0007669"/>
    <property type="project" value="Ensembl"/>
</dbReference>
<dbReference type="GO" id="GO:0005737">
    <property type="term" value="C:cytoplasm"/>
    <property type="evidence" value="ECO:0000250"/>
    <property type="project" value="UniProtKB"/>
</dbReference>
<dbReference type="GO" id="GO:0009898">
    <property type="term" value="C:cytoplasmic side of plasma membrane"/>
    <property type="evidence" value="ECO:0000314"/>
    <property type="project" value="UniProt"/>
</dbReference>
<dbReference type="GO" id="GO:0005829">
    <property type="term" value="C:cytosol"/>
    <property type="evidence" value="ECO:0000304"/>
    <property type="project" value="Reactome"/>
</dbReference>
<dbReference type="GO" id="GO:0030666">
    <property type="term" value="C:endocytic vesicle membrane"/>
    <property type="evidence" value="ECO:0000304"/>
    <property type="project" value="Reactome"/>
</dbReference>
<dbReference type="GO" id="GO:0070062">
    <property type="term" value="C:extracellular exosome"/>
    <property type="evidence" value="ECO:0007005"/>
    <property type="project" value="UniProtKB"/>
</dbReference>
<dbReference type="GO" id="GO:0098978">
    <property type="term" value="C:glutamatergic synapse"/>
    <property type="evidence" value="ECO:0007669"/>
    <property type="project" value="Ensembl"/>
</dbReference>
<dbReference type="GO" id="GO:0005794">
    <property type="term" value="C:Golgi apparatus"/>
    <property type="evidence" value="ECO:0000314"/>
    <property type="project" value="HPA"/>
</dbReference>
<dbReference type="GO" id="GO:0034666">
    <property type="term" value="C:integrin alpha2-beta1 complex"/>
    <property type="evidence" value="ECO:0007669"/>
    <property type="project" value="Ensembl"/>
</dbReference>
<dbReference type="GO" id="GO:0043231">
    <property type="term" value="C:intracellular membrane-bounded organelle"/>
    <property type="evidence" value="ECO:0000314"/>
    <property type="project" value="HPA"/>
</dbReference>
<dbReference type="GO" id="GO:0005765">
    <property type="term" value="C:lysosomal membrane"/>
    <property type="evidence" value="ECO:0000304"/>
    <property type="project" value="Reactome"/>
</dbReference>
<dbReference type="GO" id="GO:0045121">
    <property type="term" value="C:membrane raft"/>
    <property type="evidence" value="ECO:0000314"/>
    <property type="project" value="UniProtKB"/>
</dbReference>
<dbReference type="GO" id="GO:0030061">
    <property type="term" value="C:mitochondrial crista"/>
    <property type="evidence" value="ECO:0007669"/>
    <property type="project" value="Ensembl"/>
</dbReference>
<dbReference type="GO" id="GO:0005634">
    <property type="term" value="C:nucleus"/>
    <property type="evidence" value="ECO:0000314"/>
    <property type="project" value="UniProtKB"/>
</dbReference>
<dbReference type="GO" id="GO:0048471">
    <property type="term" value="C:perinuclear region of cytoplasm"/>
    <property type="evidence" value="ECO:0000314"/>
    <property type="project" value="UniProtKB"/>
</dbReference>
<dbReference type="GO" id="GO:0005886">
    <property type="term" value="C:plasma membrane"/>
    <property type="evidence" value="ECO:0000314"/>
    <property type="project" value="HPA"/>
</dbReference>
<dbReference type="GO" id="GO:0099091">
    <property type="term" value="C:postsynaptic specialization, intracellular component"/>
    <property type="evidence" value="ECO:0007669"/>
    <property type="project" value="Ensembl"/>
</dbReference>
<dbReference type="GO" id="GO:0005524">
    <property type="term" value="F:ATP binding"/>
    <property type="evidence" value="ECO:0007669"/>
    <property type="project" value="UniProtKB-KW"/>
</dbReference>
<dbReference type="GO" id="GO:0019899">
    <property type="term" value="F:enzyme binding"/>
    <property type="evidence" value="ECO:0000353"/>
    <property type="project" value="UniProtKB"/>
</dbReference>
<dbReference type="GO" id="GO:0046875">
    <property type="term" value="F:ephrin receptor binding"/>
    <property type="evidence" value="ECO:0000353"/>
    <property type="project" value="ARUK-UCL"/>
</dbReference>
<dbReference type="GO" id="GO:0043015">
    <property type="term" value="F:gamma-tubulin binding"/>
    <property type="evidence" value="ECO:0007669"/>
    <property type="project" value="Ensembl"/>
</dbReference>
<dbReference type="GO" id="GO:0043208">
    <property type="term" value="F:glycosphingolipid binding"/>
    <property type="evidence" value="ECO:0007669"/>
    <property type="project" value="Ensembl"/>
</dbReference>
<dbReference type="GO" id="GO:0005178">
    <property type="term" value="F:integrin binding"/>
    <property type="evidence" value="ECO:0007669"/>
    <property type="project" value="Ensembl"/>
</dbReference>
<dbReference type="GO" id="GO:0016301">
    <property type="term" value="F:kinase activity"/>
    <property type="evidence" value="ECO:0000303"/>
    <property type="project" value="ARUK-UCL"/>
</dbReference>
<dbReference type="GO" id="GO:0004715">
    <property type="term" value="F:non-membrane spanning protein tyrosine kinase activity"/>
    <property type="evidence" value="ECO:0000315"/>
    <property type="project" value="ARUK-UCL"/>
</dbReference>
<dbReference type="GO" id="GO:0141038">
    <property type="term" value="F:phosphatidylinositol 3-kinase activator activity"/>
    <property type="evidence" value="ECO:0007669"/>
    <property type="project" value="Ensembl"/>
</dbReference>
<dbReference type="GO" id="GO:0051219">
    <property type="term" value="F:phosphoprotein binding"/>
    <property type="evidence" value="ECO:0007669"/>
    <property type="project" value="Ensembl"/>
</dbReference>
<dbReference type="GO" id="GO:0140031">
    <property type="term" value="F:phosphorylation-dependent protein binding"/>
    <property type="evidence" value="ECO:0000353"/>
    <property type="project" value="UniProtKB"/>
</dbReference>
<dbReference type="GO" id="GO:0005161">
    <property type="term" value="F:platelet-derived growth factor receptor binding"/>
    <property type="evidence" value="ECO:0007669"/>
    <property type="project" value="Ensembl"/>
</dbReference>
<dbReference type="GO" id="GO:0004713">
    <property type="term" value="F:protein tyrosine kinase activity"/>
    <property type="evidence" value="ECO:0000314"/>
    <property type="project" value="UniProtKB"/>
</dbReference>
<dbReference type="GO" id="GO:0097110">
    <property type="term" value="F:scaffold protein binding"/>
    <property type="evidence" value="ECO:0000353"/>
    <property type="project" value="ARUK-UCL"/>
</dbReference>
<dbReference type="GO" id="GO:0017124">
    <property type="term" value="F:SH3 domain binding"/>
    <property type="evidence" value="ECO:0007669"/>
    <property type="project" value="Ensembl"/>
</dbReference>
<dbReference type="GO" id="GO:0030546">
    <property type="term" value="F:signaling receptor activator activity"/>
    <property type="evidence" value="ECO:0000314"/>
    <property type="project" value="ARUK-UCL"/>
</dbReference>
<dbReference type="GO" id="GO:0005102">
    <property type="term" value="F:signaling receptor binding"/>
    <property type="evidence" value="ECO:0000318"/>
    <property type="project" value="GO_Central"/>
</dbReference>
<dbReference type="GO" id="GO:0044325">
    <property type="term" value="F:transmembrane transporter binding"/>
    <property type="evidence" value="ECO:0000353"/>
    <property type="project" value="BHF-UCL"/>
</dbReference>
<dbReference type="GO" id="GO:0031625">
    <property type="term" value="F:ubiquitin protein ligase binding"/>
    <property type="evidence" value="ECO:0007669"/>
    <property type="project" value="Ensembl"/>
</dbReference>
<dbReference type="GO" id="GO:0002250">
    <property type="term" value="P:adaptive immune response"/>
    <property type="evidence" value="ECO:0007669"/>
    <property type="project" value="UniProtKB-KW"/>
</dbReference>
<dbReference type="GO" id="GO:0006914">
    <property type="term" value="P:autophagy"/>
    <property type="evidence" value="ECO:0007669"/>
    <property type="project" value="Ensembl"/>
</dbReference>
<dbReference type="GO" id="GO:0001782">
    <property type="term" value="P:B cell homeostasis"/>
    <property type="evidence" value="ECO:0000250"/>
    <property type="project" value="UniProtKB"/>
</dbReference>
<dbReference type="GO" id="GO:0050853">
    <property type="term" value="P:B cell receptor signaling pathway"/>
    <property type="evidence" value="ECO:0007669"/>
    <property type="project" value="Ensembl"/>
</dbReference>
<dbReference type="GO" id="GO:0038159">
    <property type="term" value="P:C-X-C chemokine receptor CXCR4 signaling pathway"/>
    <property type="evidence" value="ECO:0000315"/>
    <property type="project" value="UniProtKB"/>
</dbReference>
<dbReference type="GO" id="GO:0000902">
    <property type="term" value="P:cell morphogenesis"/>
    <property type="evidence" value="ECO:0007669"/>
    <property type="project" value="Ensembl"/>
</dbReference>
<dbReference type="GO" id="GO:0007169">
    <property type="term" value="P:cell surface receptor protein tyrosine kinase signaling pathway"/>
    <property type="evidence" value="ECO:0000315"/>
    <property type="project" value="UniProtKB"/>
</dbReference>
<dbReference type="GO" id="GO:0034605">
    <property type="term" value="P:cellular response to heat"/>
    <property type="evidence" value="ECO:0007669"/>
    <property type="project" value="Ensembl"/>
</dbReference>
<dbReference type="GO" id="GO:0071300">
    <property type="term" value="P:cellular response to retinoic acid"/>
    <property type="evidence" value="ECO:0000315"/>
    <property type="project" value="BHF-UCL"/>
</dbReference>
<dbReference type="GO" id="GO:0097028">
    <property type="term" value="P:dendritic cell differentiation"/>
    <property type="evidence" value="ECO:0000250"/>
    <property type="project" value="UniProtKB"/>
</dbReference>
<dbReference type="GO" id="GO:0000077">
    <property type="term" value="P:DNA damage checkpoint signaling"/>
    <property type="evidence" value="ECO:0000314"/>
    <property type="project" value="UniProtKB"/>
</dbReference>
<dbReference type="GO" id="GO:0006974">
    <property type="term" value="P:DNA damage response"/>
    <property type="evidence" value="ECO:0000314"/>
    <property type="project" value="UniProtKB"/>
</dbReference>
<dbReference type="GO" id="GO:0030222">
    <property type="term" value="P:eosinophil differentiation"/>
    <property type="evidence" value="ECO:0000314"/>
    <property type="project" value="UniProt"/>
</dbReference>
<dbReference type="GO" id="GO:0048013">
    <property type="term" value="P:ephrin receptor signaling pathway"/>
    <property type="evidence" value="ECO:0000316"/>
    <property type="project" value="ARUK-UCL"/>
</dbReference>
<dbReference type="GO" id="GO:0030218">
    <property type="term" value="P:erythrocyte differentiation"/>
    <property type="evidence" value="ECO:0000250"/>
    <property type="project" value="UniProtKB"/>
</dbReference>
<dbReference type="GO" id="GO:0015908">
    <property type="term" value="P:fatty acid transport"/>
    <property type="evidence" value="ECO:0000314"/>
    <property type="project" value="UniProt"/>
</dbReference>
<dbReference type="GO" id="GO:0002774">
    <property type="term" value="P:Fc receptor mediated inhibitory signaling pathway"/>
    <property type="evidence" value="ECO:0000250"/>
    <property type="project" value="UniProtKB"/>
</dbReference>
<dbReference type="GO" id="GO:0002431">
    <property type="term" value="P:Fc receptor mediated stimulatory signaling pathway"/>
    <property type="evidence" value="ECO:0000250"/>
    <property type="project" value="UniProtKB"/>
</dbReference>
<dbReference type="GO" id="GO:0038095">
    <property type="term" value="P:Fc-epsilon receptor signaling pathway"/>
    <property type="evidence" value="ECO:0000304"/>
    <property type="project" value="Reactome"/>
</dbReference>
<dbReference type="GO" id="GO:0038096">
    <property type="term" value="P:Fc-gamma receptor signaling pathway involved in phagocytosis"/>
    <property type="evidence" value="ECO:0000304"/>
    <property type="project" value="Reactome"/>
</dbReference>
<dbReference type="GO" id="GO:0060397">
    <property type="term" value="P:growth hormone receptor signaling pathway via JAK-STAT"/>
    <property type="evidence" value="ECO:0000304"/>
    <property type="project" value="Reactome"/>
</dbReference>
<dbReference type="GO" id="GO:0002244">
    <property type="term" value="P:hematopoietic progenitor cell differentiation"/>
    <property type="evidence" value="ECO:0000315"/>
    <property type="project" value="UniProtKB"/>
</dbReference>
<dbReference type="GO" id="GO:0002553">
    <property type="term" value="P:histamine secretion by mast cell"/>
    <property type="evidence" value="ECO:0007669"/>
    <property type="project" value="Ensembl"/>
</dbReference>
<dbReference type="GO" id="GO:0002768">
    <property type="term" value="P:immune response-regulating cell surface receptor signaling pathway"/>
    <property type="evidence" value="ECO:0000250"/>
    <property type="project" value="UniProtKB"/>
</dbReference>
<dbReference type="GO" id="GO:0045087">
    <property type="term" value="P:innate immune response"/>
    <property type="evidence" value="ECO:0007669"/>
    <property type="project" value="UniProtKB-KW"/>
</dbReference>
<dbReference type="GO" id="GO:0038043">
    <property type="term" value="P:interleukin-5-mediated signaling pathway"/>
    <property type="evidence" value="ECO:0000314"/>
    <property type="project" value="UniProt"/>
</dbReference>
<dbReference type="GO" id="GO:0050900">
    <property type="term" value="P:leukocyte migration"/>
    <property type="evidence" value="ECO:0000304"/>
    <property type="project" value="Reactome"/>
</dbReference>
<dbReference type="GO" id="GO:0031663">
    <property type="term" value="P:lipopolysaccharide-mediated signaling pathway"/>
    <property type="evidence" value="ECO:0000250"/>
    <property type="project" value="UniProtKB"/>
</dbReference>
<dbReference type="GO" id="GO:0030889">
    <property type="term" value="P:negative regulation of B cell proliferation"/>
    <property type="evidence" value="ECO:0007669"/>
    <property type="project" value="Ensembl"/>
</dbReference>
<dbReference type="GO" id="GO:0008285">
    <property type="term" value="P:negative regulation of cell population proliferation"/>
    <property type="evidence" value="ECO:0000315"/>
    <property type="project" value="UniProtKB"/>
</dbReference>
<dbReference type="GO" id="GO:0070373">
    <property type="term" value="P:negative regulation of ERK1 and ERK2 cascade"/>
    <property type="evidence" value="ECO:0000250"/>
    <property type="project" value="UniProtKB"/>
</dbReference>
<dbReference type="GO" id="GO:0050777">
    <property type="term" value="P:negative regulation of immune response"/>
    <property type="evidence" value="ECO:0000304"/>
    <property type="project" value="UniProtKB"/>
</dbReference>
<dbReference type="GO" id="GO:0002862">
    <property type="term" value="P:negative regulation of inflammatory response to antigenic stimulus"/>
    <property type="evidence" value="ECO:0000304"/>
    <property type="project" value="Reactome"/>
</dbReference>
<dbReference type="GO" id="GO:1902532">
    <property type="term" value="P:negative regulation of intracellular signal transduction"/>
    <property type="evidence" value="ECO:0000250"/>
    <property type="project" value="UniProtKB"/>
</dbReference>
<dbReference type="GO" id="GO:0043407">
    <property type="term" value="P:negative regulation of MAP kinase activity"/>
    <property type="evidence" value="ECO:0000250"/>
    <property type="project" value="UniProtKB"/>
</dbReference>
<dbReference type="GO" id="GO:0070667">
    <property type="term" value="P:negative regulation of mast cell proliferation"/>
    <property type="evidence" value="ECO:0000250"/>
    <property type="project" value="UniProtKB"/>
</dbReference>
<dbReference type="GO" id="GO:0002762">
    <property type="term" value="P:negative regulation of myeloid leukocyte differentiation"/>
    <property type="evidence" value="ECO:0007669"/>
    <property type="project" value="Ensembl"/>
</dbReference>
<dbReference type="GO" id="GO:0001933">
    <property type="term" value="P:negative regulation of protein phosphorylation"/>
    <property type="evidence" value="ECO:0000250"/>
    <property type="project" value="UniProtKB"/>
</dbReference>
<dbReference type="GO" id="GO:0034136">
    <property type="term" value="P:negative regulation of toll-like receptor 2 signaling pathway"/>
    <property type="evidence" value="ECO:0000250"/>
    <property type="project" value="UniProtKB"/>
</dbReference>
<dbReference type="GO" id="GO:0034144">
    <property type="term" value="P:negative regulation of toll-like receptor 4 signaling pathway"/>
    <property type="evidence" value="ECO:0000250"/>
    <property type="project" value="UniProtKB"/>
</dbReference>
<dbReference type="GO" id="GO:0150076">
    <property type="term" value="P:neuroinflammatory response"/>
    <property type="evidence" value="ECO:0007669"/>
    <property type="project" value="Ensembl"/>
</dbReference>
<dbReference type="GO" id="GO:0031175">
    <property type="term" value="P:neuron projection development"/>
    <property type="evidence" value="ECO:0000318"/>
    <property type="project" value="GO_Central"/>
</dbReference>
<dbReference type="GO" id="GO:0014003">
    <property type="term" value="P:oligodendrocyte development"/>
    <property type="evidence" value="ECO:0007669"/>
    <property type="project" value="Ensembl"/>
</dbReference>
<dbReference type="GO" id="GO:0018108">
    <property type="term" value="P:peptidyl-tyrosine phosphorylation"/>
    <property type="evidence" value="ECO:0000314"/>
    <property type="project" value="UniProtKB"/>
</dbReference>
<dbReference type="GO" id="GO:0002576">
    <property type="term" value="P:platelet degranulation"/>
    <property type="evidence" value="ECO:0000250"/>
    <property type="project" value="UniProtKB"/>
</dbReference>
<dbReference type="GO" id="GO:1902993">
    <property type="term" value="P:positive regulation of amyloid precursor protein catabolic process"/>
    <property type="evidence" value="ECO:0000315"/>
    <property type="project" value="ARUK-UCL"/>
</dbReference>
<dbReference type="GO" id="GO:0030335">
    <property type="term" value="P:positive regulation of cell migration"/>
    <property type="evidence" value="ECO:0007669"/>
    <property type="project" value="Ensembl"/>
</dbReference>
<dbReference type="GO" id="GO:0008284">
    <property type="term" value="P:positive regulation of cell population proliferation"/>
    <property type="evidence" value="ECO:0000250"/>
    <property type="project" value="UniProtKB"/>
</dbReference>
<dbReference type="GO" id="GO:2000670">
    <property type="term" value="P:positive regulation of dendritic cell apoptotic process"/>
    <property type="evidence" value="ECO:0000250"/>
    <property type="project" value="UniProtKB"/>
</dbReference>
<dbReference type="GO" id="GO:0060369">
    <property type="term" value="P:positive regulation of Fc receptor mediated stimulatory signaling pathway"/>
    <property type="evidence" value="ECO:0007669"/>
    <property type="project" value="Ensembl"/>
</dbReference>
<dbReference type="GO" id="GO:0060252">
    <property type="term" value="P:positive regulation of glial cell proliferation"/>
    <property type="evidence" value="ECO:0007669"/>
    <property type="project" value="Ensembl"/>
</dbReference>
<dbReference type="GO" id="GO:0043410">
    <property type="term" value="P:positive regulation of MAPK cascade"/>
    <property type="evidence" value="ECO:0000314"/>
    <property type="project" value="UniProtKB"/>
</dbReference>
<dbReference type="GO" id="GO:0070668">
    <property type="term" value="P:positive regulation of mast cell proliferation"/>
    <property type="evidence" value="ECO:0000315"/>
    <property type="project" value="UniProtKB"/>
</dbReference>
<dbReference type="GO" id="GO:0010976">
    <property type="term" value="P:positive regulation of neuron projection development"/>
    <property type="evidence" value="ECO:0000315"/>
    <property type="project" value="BHF-UCL"/>
</dbReference>
<dbReference type="GO" id="GO:0070447">
    <property type="term" value="P:positive regulation of oligodendrocyte progenitor proliferation"/>
    <property type="evidence" value="ECO:0007669"/>
    <property type="project" value="Ensembl"/>
</dbReference>
<dbReference type="GO" id="GO:0042327">
    <property type="term" value="P:positive regulation of phosphorylation"/>
    <property type="evidence" value="ECO:0007669"/>
    <property type="project" value="Ensembl"/>
</dbReference>
<dbReference type="GO" id="GO:0046777">
    <property type="term" value="P:protein autophosphorylation"/>
    <property type="evidence" value="ECO:0000314"/>
    <property type="project" value="UniProtKB"/>
</dbReference>
<dbReference type="GO" id="GO:0006468">
    <property type="term" value="P:protein phosphorylation"/>
    <property type="evidence" value="ECO:0000314"/>
    <property type="project" value="UniProtKB"/>
</dbReference>
<dbReference type="GO" id="GO:0002902">
    <property type="term" value="P:regulation of B cell apoptotic process"/>
    <property type="evidence" value="ECO:0007669"/>
    <property type="project" value="Ensembl"/>
</dbReference>
<dbReference type="GO" id="GO:0050855">
    <property type="term" value="P:regulation of B cell receptor signaling pathway"/>
    <property type="evidence" value="ECO:0000250"/>
    <property type="project" value="UniProtKB"/>
</dbReference>
<dbReference type="GO" id="GO:0033628">
    <property type="term" value="P:regulation of cell adhesion mediated by integrin"/>
    <property type="evidence" value="ECO:0000315"/>
    <property type="project" value="UniProtKB"/>
</dbReference>
<dbReference type="GO" id="GO:0001817">
    <property type="term" value="P:regulation of cytokine production"/>
    <property type="evidence" value="ECO:0000250"/>
    <property type="project" value="UniProtKB"/>
</dbReference>
<dbReference type="GO" id="GO:0070372">
    <property type="term" value="P:regulation of ERK1 and ERK2 cascade"/>
    <property type="evidence" value="ECO:0000250"/>
    <property type="project" value="UniProtKB"/>
</dbReference>
<dbReference type="GO" id="GO:0045646">
    <property type="term" value="P:regulation of erythrocyte differentiation"/>
    <property type="evidence" value="ECO:0000250"/>
    <property type="project" value="UniProtKB"/>
</dbReference>
<dbReference type="GO" id="GO:0033003">
    <property type="term" value="P:regulation of mast cell activation"/>
    <property type="evidence" value="ECO:0000250"/>
    <property type="project" value="UniProtKB"/>
</dbReference>
<dbReference type="GO" id="GO:0043304">
    <property type="term" value="P:regulation of mast cell degranulation"/>
    <property type="evidence" value="ECO:0000250"/>
    <property type="project" value="UniProtKB"/>
</dbReference>
<dbReference type="GO" id="GO:0090025">
    <property type="term" value="P:regulation of monocyte chemotaxis"/>
    <property type="evidence" value="ECO:0000315"/>
    <property type="project" value="UniProtKB"/>
</dbReference>
<dbReference type="GO" id="GO:0090330">
    <property type="term" value="P:regulation of platelet aggregation"/>
    <property type="evidence" value="ECO:0000250"/>
    <property type="project" value="UniProtKB"/>
</dbReference>
<dbReference type="GO" id="GO:0001932">
    <property type="term" value="P:regulation of protein phosphorylation"/>
    <property type="evidence" value="ECO:0000304"/>
    <property type="project" value="UniProtKB"/>
</dbReference>
<dbReference type="GO" id="GO:0051279">
    <property type="term" value="P:regulation of release of sequestered calcium ion into cytosol"/>
    <property type="evidence" value="ECO:0007669"/>
    <property type="project" value="Ensembl"/>
</dbReference>
<dbReference type="GO" id="GO:0043200">
    <property type="term" value="P:response to amino acid"/>
    <property type="evidence" value="ECO:0007669"/>
    <property type="project" value="Ensembl"/>
</dbReference>
<dbReference type="GO" id="GO:0048678">
    <property type="term" value="P:response to axon injury"/>
    <property type="evidence" value="ECO:0007669"/>
    <property type="project" value="Ensembl"/>
</dbReference>
<dbReference type="GO" id="GO:0009743">
    <property type="term" value="P:response to carbohydrate"/>
    <property type="evidence" value="ECO:0007669"/>
    <property type="project" value="Ensembl"/>
</dbReference>
<dbReference type="GO" id="GO:0009725">
    <property type="term" value="P:response to hormone"/>
    <property type="evidence" value="ECO:0000250"/>
    <property type="project" value="UniProtKB"/>
</dbReference>
<dbReference type="GO" id="GO:0032868">
    <property type="term" value="P:response to insulin"/>
    <property type="evidence" value="ECO:0007669"/>
    <property type="project" value="Ensembl"/>
</dbReference>
<dbReference type="GO" id="GO:0006991">
    <property type="term" value="P:response to sterol depletion"/>
    <property type="evidence" value="ECO:0007669"/>
    <property type="project" value="Ensembl"/>
</dbReference>
<dbReference type="GO" id="GO:0009636">
    <property type="term" value="P:response to toxic substance"/>
    <property type="evidence" value="ECO:0007669"/>
    <property type="project" value="Ensembl"/>
</dbReference>
<dbReference type="GO" id="GO:0009410">
    <property type="term" value="P:response to xenobiotic stimulus"/>
    <property type="evidence" value="ECO:0007669"/>
    <property type="project" value="Ensembl"/>
</dbReference>
<dbReference type="GO" id="GO:0007165">
    <property type="term" value="P:signal transduction"/>
    <property type="evidence" value="ECO:0000304"/>
    <property type="project" value="ProtInc"/>
</dbReference>
<dbReference type="GO" id="GO:0002223">
    <property type="term" value="P:stimulatory C-type lectin receptor signaling pathway"/>
    <property type="evidence" value="ECO:0000304"/>
    <property type="project" value="Reactome"/>
</dbReference>
<dbReference type="GO" id="GO:0031295">
    <property type="term" value="P:T cell costimulation"/>
    <property type="evidence" value="ECO:0000304"/>
    <property type="project" value="Reactome"/>
</dbReference>
<dbReference type="GO" id="GO:0002513">
    <property type="term" value="P:tolerance induction to self antigen"/>
    <property type="evidence" value="ECO:0000250"/>
    <property type="project" value="UniProtKB"/>
</dbReference>
<dbReference type="GO" id="GO:0034142">
    <property type="term" value="P:toll-like receptor 4 signaling pathway"/>
    <property type="evidence" value="ECO:0007669"/>
    <property type="project" value="Ensembl"/>
</dbReference>
<dbReference type="CDD" id="cd05072">
    <property type="entry name" value="PTKc_Lyn"/>
    <property type="match status" value="1"/>
</dbReference>
<dbReference type="CDD" id="cd10364">
    <property type="entry name" value="SH2_Src_Lyn"/>
    <property type="match status" value="1"/>
</dbReference>
<dbReference type="CDD" id="cd12004">
    <property type="entry name" value="SH3_Lyn"/>
    <property type="match status" value="1"/>
</dbReference>
<dbReference type="DisProt" id="DP02545"/>
<dbReference type="FunFam" id="1.10.510.10:FF:000553">
    <property type="entry name" value="Tyrosine-protein kinase"/>
    <property type="match status" value="1"/>
</dbReference>
<dbReference type="FunFam" id="2.30.30.40:FF:000095">
    <property type="entry name" value="Tyrosine-protein kinase"/>
    <property type="match status" value="1"/>
</dbReference>
<dbReference type="FunFam" id="3.30.200.20:FF:000036">
    <property type="entry name" value="Tyrosine-protein kinase"/>
    <property type="match status" value="1"/>
</dbReference>
<dbReference type="FunFam" id="3.30.505.10:FF:000010">
    <property type="entry name" value="Tyrosine-protein kinase"/>
    <property type="match status" value="1"/>
</dbReference>
<dbReference type="Gene3D" id="3.30.200.20">
    <property type="entry name" value="Phosphorylase Kinase, domain 1"/>
    <property type="match status" value="1"/>
</dbReference>
<dbReference type="Gene3D" id="3.30.505.10">
    <property type="entry name" value="SH2 domain"/>
    <property type="match status" value="1"/>
</dbReference>
<dbReference type="Gene3D" id="2.30.30.40">
    <property type="entry name" value="SH3 Domains"/>
    <property type="match status" value="1"/>
</dbReference>
<dbReference type="Gene3D" id="1.10.510.10">
    <property type="entry name" value="Transferase(Phosphotransferase) domain 1"/>
    <property type="match status" value="1"/>
</dbReference>
<dbReference type="IDEAL" id="IID00701"/>
<dbReference type="InterPro" id="IPR011009">
    <property type="entry name" value="Kinase-like_dom_sf"/>
</dbReference>
<dbReference type="InterPro" id="IPR035852">
    <property type="entry name" value="Lyn_SH2"/>
</dbReference>
<dbReference type="InterPro" id="IPR035748">
    <property type="entry name" value="Lyn_SH3"/>
</dbReference>
<dbReference type="InterPro" id="IPR050198">
    <property type="entry name" value="Non-receptor_tyrosine_kinases"/>
</dbReference>
<dbReference type="InterPro" id="IPR000719">
    <property type="entry name" value="Prot_kinase_dom"/>
</dbReference>
<dbReference type="InterPro" id="IPR017441">
    <property type="entry name" value="Protein_kinase_ATP_BS"/>
</dbReference>
<dbReference type="InterPro" id="IPR001245">
    <property type="entry name" value="Ser-Thr/Tyr_kinase_cat_dom"/>
</dbReference>
<dbReference type="InterPro" id="IPR000980">
    <property type="entry name" value="SH2"/>
</dbReference>
<dbReference type="InterPro" id="IPR036860">
    <property type="entry name" value="SH2_dom_sf"/>
</dbReference>
<dbReference type="InterPro" id="IPR036028">
    <property type="entry name" value="SH3-like_dom_sf"/>
</dbReference>
<dbReference type="InterPro" id="IPR001452">
    <property type="entry name" value="SH3_domain"/>
</dbReference>
<dbReference type="InterPro" id="IPR008266">
    <property type="entry name" value="Tyr_kinase_AS"/>
</dbReference>
<dbReference type="InterPro" id="IPR020635">
    <property type="entry name" value="Tyr_kinase_cat_dom"/>
</dbReference>
<dbReference type="PANTHER" id="PTHR24418">
    <property type="entry name" value="TYROSINE-PROTEIN KINASE"/>
    <property type="match status" value="1"/>
</dbReference>
<dbReference type="Pfam" id="PF07714">
    <property type="entry name" value="PK_Tyr_Ser-Thr"/>
    <property type="match status" value="1"/>
</dbReference>
<dbReference type="Pfam" id="PF00017">
    <property type="entry name" value="SH2"/>
    <property type="match status" value="1"/>
</dbReference>
<dbReference type="Pfam" id="PF00018">
    <property type="entry name" value="SH3_1"/>
    <property type="match status" value="1"/>
</dbReference>
<dbReference type="PRINTS" id="PR00401">
    <property type="entry name" value="SH2DOMAIN"/>
</dbReference>
<dbReference type="PRINTS" id="PR00452">
    <property type="entry name" value="SH3DOMAIN"/>
</dbReference>
<dbReference type="PRINTS" id="PR00109">
    <property type="entry name" value="TYRKINASE"/>
</dbReference>
<dbReference type="SMART" id="SM00252">
    <property type="entry name" value="SH2"/>
    <property type="match status" value="1"/>
</dbReference>
<dbReference type="SMART" id="SM00326">
    <property type="entry name" value="SH3"/>
    <property type="match status" value="1"/>
</dbReference>
<dbReference type="SMART" id="SM00219">
    <property type="entry name" value="TyrKc"/>
    <property type="match status" value="1"/>
</dbReference>
<dbReference type="SUPFAM" id="SSF56112">
    <property type="entry name" value="Protein kinase-like (PK-like)"/>
    <property type="match status" value="1"/>
</dbReference>
<dbReference type="SUPFAM" id="SSF55550">
    <property type="entry name" value="SH2 domain"/>
    <property type="match status" value="1"/>
</dbReference>
<dbReference type="SUPFAM" id="SSF50044">
    <property type="entry name" value="SH3-domain"/>
    <property type="match status" value="1"/>
</dbReference>
<dbReference type="PROSITE" id="PS00107">
    <property type="entry name" value="PROTEIN_KINASE_ATP"/>
    <property type="match status" value="1"/>
</dbReference>
<dbReference type="PROSITE" id="PS50011">
    <property type="entry name" value="PROTEIN_KINASE_DOM"/>
    <property type="match status" value="1"/>
</dbReference>
<dbReference type="PROSITE" id="PS00109">
    <property type="entry name" value="PROTEIN_KINASE_TYR"/>
    <property type="match status" value="1"/>
</dbReference>
<dbReference type="PROSITE" id="PS50001">
    <property type="entry name" value="SH2"/>
    <property type="match status" value="1"/>
</dbReference>
<dbReference type="PROSITE" id="PS50002">
    <property type="entry name" value="SH3"/>
    <property type="match status" value="1"/>
</dbReference>
<comment type="function">
    <text evidence="1 8 9 10 12 13 14 18 20 22 27 28 29 30 31 32 33 35 39 44 45 47 51">Non-receptor tyrosine-protein kinase that transmits signals from cell surface receptors and plays an important role in the regulation of innate and adaptive immune responses, hematopoiesis, responses to growth factors and cytokines, integrin signaling, but also responses to DNA damage and genotoxic agents. Functions primarily as negative regulator, but can also function as activator, depending on the context. Required for the initiation of the B-cell response, but also for its down-regulation and termination. Plays an important role in the regulation of B-cell differentiation, proliferation, survival and apoptosis, and is important for immune self-tolerance. Acts downstream of several immune receptors, including the B-cell receptor, CD79A, CD79B, CD5, CD19, CD22, FCER1, FCGR2, FCGR1A, TLR2 and TLR4. Plays a role in the inflammatory response to bacterial lipopolysaccharide. Mediates the responses to cytokines and growth factors in hematopoietic progenitors, platelets, erythrocytes, and in mature myeloid cells, such as dendritic cells, neutrophils and eosinophils. Acts downstream of EPOR, KIT, MPL, the chemokine receptor CXCR4, as well as the receptors for IL3, IL5 and CSF2. Plays an important role in integrin signaling. Regulates cell proliferation, survival, differentiation, migration, adhesion, degranulation, and cytokine release. Involved in the regulation of endothelial activation, neutrophil adhesion and transendothelial migration (PubMed:36932076). Down-regulates signaling pathways by phosphorylation of immunoreceptor tyrosine-based inhibitory motifs (ITIM), that then serve as binding sites for phosphatases, such as PTPN6/SHP-1, PTPN11/SHP-2 and INPP5D/SHIP-1, that modulate signaling by dephosphorylation of kinases and their substrates. Phosphorylates LIME1 in response to CD22 activation. Phosphorylates BTK, CBL, CD5, CD19, CD72, CD79A, CD79B, CSF2RB, DOK1, HCLS1, LILRB3/PIR-B, MS4A2/FCER1B, SYK and TEC. Promotes phosphorylation of SIRPA, PTPN6/SHP-1, PTPN11/SHP-2 and INPP5D/SHIP-1. Mediates phosphorylation of the BCR-ABL fusion protein. Required for rapid phosphorylation of FER in response to FCER1 activation. Mediates KIT phosphorylation. Acts as an effector of EPOR (erythropoietin receptor) in controlling KIT expression and may play a role in erythroid differentiation during the switch between proliferation and maturation. Depending on the context, activates or inhibits several signaling cascades. Regulates phosphatidylinositol 3-kinase activity and AKT1 activation. Regulates activation of the MAP kinase signaling cascade, including activation of MAP2K1/MEK1, MAPK1/ERK2, MAPK3/ERK1, MAPK8/JNK1 and MAPK9/JNK2. Mediates activation of STAT5A and/or STAT5B. Phosphorylates LPXN on 'Tyr-72'. Kinase activity facilitates TLR4-TLR6 heterodimerization and signal initiation. Phosphorylates SCIMP on 'Tyr-107'; this enhances binding of SCIMP to TLR4, promoting the phosphorylation of TLR4, and a selective cytokine response to lipopolysaccharide in macrophages (By similarity). Phosphorylates CLNK (By similarity). Phosphorylates BCAR1/CAS and NEDD9/HEF1 (PubMed:9020138).</text>
</comment>
<comment type="catalytic activity">
    <reaction evidence="5 13 14 46 50">
        <text>L-tyrosyl-[protein] + ATP = O-phospho-L-tyrosyl-[protein] + ADP + H(+)</text>
        <dbReference type="Rhea" id="RHEA:10596"/>
        <dbReference type="Rhea" id="RHEA-COMP:10136"/>
        <dbReference type="Rhea" id="RHEA-COMP:20101"/>
        <dbReference type="ChEBI" id="CHEBI:15378"/>
        <dbReference type="ChEBI" id="CHEBI:30616"/>
        <dbReference type="ChEBI" id="CHEBI:46858"/>
        <dbReference type="ChEBI" id="CHEBI:61978"/>
        <dbReference type="ChEBI" id="CHEBI:456216"/>
        <dbReference type="EC" id="2.7.10.2"/>
    </reaction>
</comment>
<comment type="activity regulation">
    <text evidence="24 49">Subject to autoinhibition, mediated by intramolecular interactions between the SH2 domain and the C-terminal phosphotyrosine. Phosphorylation at Tyr-397 is required for optimal activity. Phosphorylated by CSK at Tyr-508; phosphorylation at Tyr-508 inhibits kinase activity. Kinase activity is modulated by dephosphorylation by PTPRC/CD45. Inhibited by Dasatinib, PP2, and SU6656.</text>
</comment>
<comment type="subunit">
    <text evidence="1 7 8 9 11 13 14 16 17 23 24 25 27 28 30 31 36 37 38 39 40 41 46 47 50 51 53 54">Interacts with TEC. Interacts (via SH2 domain) with FLT3 (tyrosine phosphorylated). Interacts with LIME1 and with CD79A upon activation of the B-cell antigen receptor. Interacts with the B-cell receptor complex. Interacts with phosphorylated THEMIS2. Interacts with EPOR. Interacts with MS4A2/FCER1B. Interaction (via the SH2 and SH3 domains) with MUC1 is stimulated by IL7 and the subsequent phosphorylation increases the binding between MUC1 and CTNNB1/beta-catenin. Interacts with ADAM15. Interacts with NDFIP2 and more weakly with NDFIP1. Interacts with FASLG. Interacts with KIT. Interacts with HCLS1. Interacts with FCGR2B. Interacts with FCGR1A; the interaction may be indirect. Interacts with CD19, CD22, CD79A and CD79B. Interacts (via SH3 domain) with CBLC, PPP1R15A and PDE4A. Interacts with TGFB1I1. Interacts (via SH3 domain) with PIK3R1, the regulatory subunit of phosphatidylinositol 3-kinase; this interaction enhances phosphatidylinositol 3-kinase activity. Interacts with CSF2RB, the common subunit of the IL3, IL5 and CSF2 receptors. Interacts with PAG1; identified in a complex with PAG1 and STAT3. Interacts with ABL1. Interacts with PTPN6/SHP-1. Interacts (via SH3 domain) with SCIMP (via proline-rich region) (PubMed:21930792). This interaction facilitates the phosphorylation of SCIMP on 'Tyr-107', which enhances binding of SCIMP to TLR4, and consequently the phosphorylation of TLR4 in response to stimulation by lipopolysaccharide in macrophages (By similarity). Interacts with LPXN (via LD motif 3) and the interaction is induced upon B-cell antigen receptor (BCR) activation. Interacts (via SH3-domain) with ANKRD54 (via ankyrin repeat region) in an activation-independent status of LYN. Forms a multiprotein complex with ANKRD54 and HCLS1. Interacts (via SH2 and SH3 domains) with UNC119; leading to LYN activation. Interacts with CD36. Interacts with LYN (By similarity). Interacts with SKAP1 and FYB1; this interaction promotes the phosphorylation of CLNK (By similarity). Interacts with BCAR1/CAS and NEDD9/HEF1 (PubMed:9020138).</text>
</comment>
<comment type="subunit">
    <text evidence="48">(Microbial infection) Interacts with Epstein-Barr virus LMP2A.</text>
</comment>
<comment type="subunit">
    <text evidence="15 21">(Microbial infection) Interacts with Herpes virus saimiri tyrosine kinase interacting protein (Tip).</text>
</comment>
<comment type="interaction">
    <interactant intactId="EBI-79452">
        <id>P07948</id>
    </interactant>
    <interactant intactId="EBI-640741">
        <id>P01023</id>
        <label>A2M</label>
    </interactant>
    <organismsDiffer>false</organismsDiffer>
    <experiments>3</experiments>
</comment>
<comment type="interaction">
    <interactant intactId="EBI-79452">
        <id>P07948</id>
    </interactant>
    <interactant intactId="EBI-2625825">
        <id>O43184</id>
        <label>ADAM12</label>
    </interactant>
    <organismsDiffer>false</organismsDiffer>
    <experiments>2</experiments>
</comment>
<comment type="interaction">
    <interactant intactId="EBI-79452">
        <id>P07948</id>
    </interactant>
    <interactant intactId="EBI-77818">
        <id>Q13444</id>
        <label>ADAM15</label>
    </interactant>
    <organismsDiffer>false</organismsDiffer>
    <experiments>2</experiments>
</comment>
<comment type="interaction">
    <interactant intactId="EBI-79452">
        <id>P07948</id>
    </interactant>
    <interactant intactId="EBI-77613">
        <id>P05067</id>
        <label>APP</label>
    </interactant>
    <organismsDiffer>false</organismsDiffer>
    <experiments>3</experiments>
</comment>
<comment type="interaction">
    <interactant intactId="EBI-79452">
        <id>P07948</id>
    </interactant>
    <interactant intactId="EBI-608057">
        <id>P10275</id>
        <label>AR</label>
    </interactant>
    <organismsDiffer>false</organismsDiffer>
    <experiments>5</experiments>
</comment>
<comment type="interaction">
    <interactant intactId="EBI-79452">
        <id>P07948</id>
    </interactant>
    <interactant intactId="EBI-2837677">
        <id>Q8NDB2</id>
        <label>BANK1</label>
    </interactant>
    <organismsDiffer>false</organismsDiffer>
    <experiments>3</experiments>
</comment>
<comment type="interaction">
    <interactant intactId="EBI-79452">
        <id>P07948</id>
    </interactant>
    <interactant intactId="EBI-2690445">
        <id>Q96GW7</id>
        <label>BCAN</label>
    </interactant>
    <organismsDiffer>false</organismsDiffer>
    <experiments>3</experiments>
</comment>
<comment type="interaction">
    <interactant intactId="EBI-79452">
        <id>P07948</id>
    </interactant>
    <interactant intactId="EBI-78277">
        <id>P20273</id>
        <label>CD22</label>
    </interactant>
    <organismsDiffer>false</organismsDiffer>
    <experiments>2</experiments>
</comment>
<comment type="interaction">
    <interactant intactId="EBI-79452">
        <id>P07948</id>
    </interactant>
    <interactant intactId="EBI-6267018">
        <id>P25063</id>
        <label>CD24</label>
    </interactant>
    <organismsDiffer>false</organismsDiffer>
    <experiments>6</experiments>
</comment>
<comment type="interaction">
    <interactant intactId="EBI-79452">
        <id>P07948</id>
    </interactant>
    <interactant intactId="EBI-2808214">
        <id>P16671</id>
        <label>CD36</label>
    </interactant>
    <organismsDiffer>false</organismsDiffer>
    <experiments>3</experiments>
</comment>
<comment type="interaction">
    <interactant intactId="EBI-79452">
        <id>P07948</id>
    </interactant>
    <interactant intactId="EBI-6139068">
        <id>P11049</id>
        <label>CD37</label>
    </interactant>
    <organismsDiffer>false</organismsDiffer>
    <experiments>5</experiments>
</comment>
<comment type="interaction">
    <interactant intactId="EBI-79452">
        <id>P07948</id>
    </interactant>
    <interactant intactId="EBI-519280">
        <id>P46527</id>
        <label>CDKN1B</label>
    </interactant>
    <organismsDiffer>false</organismsDiffer>
    <experiments>2</experiments>
</comment>
<comment type="interaction">
    <interactant intactId="EBI-79452">
        <id>P07948</id>
    </interactant>
    <interactant intactId="EBI-10968534">
        <id>P50570-2</id>
        <label>DNM2</label>
    </interactant>
    <organismsDiffer>false</organismsDiffer>
    <experiments>3</experiments>
</comment>
<comment type="interaction">
    <interactant intactId="EBI-79452">
        <id>P07948</id>
    </interactant>
    <interactant intactId="EBI-297353">
        <id>P00533</id>
        <label>EGFR</label>
    </interactant>
    <organismsDiffer>false</organismsDiffer>
    <experiments>7</experiments>
</comment>
<comment type="interaction">
    <interactant intactId="EBI-79452">
        <id>P07948</id>
    </interactant>
    <interactant intactId="EBI-541644">
        <id>Q9BS26</id>
        <label>ERP44</label>
    </interactant>
    <organismsDiffer>false</organismsDiffer>
    <experiments>3</experiments>
</comment>
<comment type="interaction">
    <interactant intactId="EBI-79452">
        <id>P07948</id>
    </interactant>
    <interactant intactId="EBI-517684">
        <id>Q13480</id>
        <label>GAB1</label>
    </interactant>
    <organismsDiffer>false</organismsDiffer>
    <experiments>7</experiments>
</comment>
<comment type="interaction">
    <interactant intactId="EBI-79452">
        <id>P07948</id>
    </interactant>
    <interactant intactId="EBI-515278">
        <id>Q9HCN6</id>
        <label>GP6</label>
    </interactant>
    <organismsDiffer>false</organismsDiffer>
    <experiments>5</experiments>
</comment>
<comment type="interaction">
    <interactant intactId="EBI-79452">
        <id>P07948</id>
    </interactant>
    <interactant intactId="EBI-15816577">
        <id>Q9HCN6-1</id>
        <label>GP6</label>
    </interactant>
    <organismsDiffer>false</organismsDiffer>
    <experiments>2</experiments>
</comment>
<comment type="interaction">
    <interactant intactId="EBI-79452">
        <id>P07948</id>
    </interactant>
    <interactant intactId="EBI-352572">
        <id>P08238</id>
        <label>HSP90AB1</label>
    </interactant>
    <organismsDiffer>false</organismsDiffer>
    <experiments>2</experiments>
</comment>
<comment type="interaction">
    <interactant intactId="EBI-79452">
        <id>P07948</id>
    </interactant>
    <interactant intactId="EBI-703066">
        <id>P05556</id>
        <label>ITGB1</label>
    </interactant>
    <organismsDiffer>false</organismsDiffer>
    <experiments>4</experiments>
</comment>
<comment type="interaction">
    <interactant intactId="EBI-79452">
        <id>P07948</id>
    </interactant>
    <interactant intactId="EBI-1379503">
        <id>P10721</id>
        <label>KIT</label>
    </interactant>
    <organismsDiffer>false</organismsDiffer>
    <experiments>7</experiments>
</comment>
<comment type="interaction">
    <interactant intactId="EBI-79452">
        <id>P07948</id>
    </interactant>
    <interactant intactId="EBI-302319">
        <id>Q96L34</id>
        <label>MARK4</label>
    </interactant>
    <organismsDiffer>false</organismsDiffer>
    <experiments>3</experiments>
</comment>
<comment type="interaction">
    <interactant intactId="EBI-79452">
        <id>P07948</id>
    </interactant>
    <interactant intactId="EBI-355924">
        <id>P33993</id>
        <label>MCM7</label>
    </interactant>
    <organismsDiffer>false</organismsDiffer>
    <experiments>4</experiments>
</comment>
<comment type="interaction">
    <interactant intactId="EBI-79452">
        <id>P07948</id>
    </interactant>
    <interactant intactId="EBI-1189067">
        <id>P51608</id>
        <label>MECP2</label>
    </interactant>
    <organismsDiffer>false</organismsDiffer>
    <experiments>3</experiments>
</comment>
<comment type="interaction">
    <interactant intactId="EBI-79452">
        <id>P07948</id>
    </interactant>
    <interactant intactId="EBI-1039152">
        <id>P08581</id>
        <label>MET</label>
    </interactant>
    <organismsDiffer>false</organismsDiffer>
    <experiments>2</experiments>
</comment>
<comment type="interaction">
    <interactant intactId="EBI-79452">
        <id>P07948</id>
    </interactant>
    <interactant intactId="EBI-2828115">
        <id>Q9NWQ8</id>
        <label>PAG1</label>
    </interactant>
    <organismsDiffer>false</organismsDiffer>
    <experiments>16</experiments>
</comment>
<comment type="interaction">
    <interactant intactId="EBI-79452">
        <id>P07948</id>
    </interactant>
    <interactant intactId="EBI-9090282">
        <id>P27986-2</id>
        <label>PIK3R1</label>
    </interactant>
    <organismsDiffer>false</organismsDiffer>
    <experiments>3</experiments>
</comment>
<comment type="interaction">
    <interactant intactId="EBI-79452">
        <id>P07948</id>
    </interactant>
    <interactant intactId="EBI-716699">
        <id>P07602</id>
        <label>PSAP</label>
    </interactant>
    <organismsDiffer>false</organismsDiffer>
    <experiments>3</experiments>
</comment>
<comment type="interaction">
    <interactant intactId="EBI-79452">
        <id>P07948</id>
    </interactant>
    <interactant intactId="EBI-296739">
        <id>P63244</id>
        <label>RACK1</label>
    </interactant>
    <organismsDiffer>false</organismsDiffer>
    <experiments>2</experiments>
</comment>
<comment type="interaction">
    <interactant intactId="EBI-79452">
        <id>P07948</id>
    </interactant>
    <interactant intactId="EBI-2872510">
        <id>Q6UWF3</id>
        <label>SCIMP</label>
    </interactant>
    <organismsDiffer>false</organismsDiffer>
    <experiments>3</experiments>
</comment>
<comment type="interaction">
    <interactant intactId="EBI-79452">
        <id>P07948</id>
    </interactant>
    <interactant intactId="EBI-985879">
        <id>P37840</id>
        <label>SNCA</label>
    </interactant>
    <organismsDiffer>false</organismsDiffer>
    <experiments>3</experiments>
</comment>
<comment type="interaction">
    <interactant intactId="EBI-79452">
        <id>P07948</id>
    </interactant>
    <interactant intactId="EBI-5235340">
        <id>Q7Z699</id>
        <label>SPRED1</label>
    </interactant>
    <organismsDiffer>false</organismsDiffer>
    <experiments>3</experiments>
</comment>
<comment type="interaction">
    <interactant intactId="EBI-79452">
        <id>P07948</id>
    </interactant>
    <interactant intactId="EBI-621482">
        <id>P12931</id>
        <label>SRC</label>
    </interactant>
    <organismsDiffer>false</organismsDiffer>
    <experiments>4</experiments>
</comment>
<comment type="interaction">
    <interactant intactId="EBI-79452">
        <id>P07948</id>
    </interactant>
    <interactant intactId="EBI-621463">
        <id>Q8R5G7</id>
        <label>Arap3</label>
    </interactant>
    <organismsDiffer>true</organismsDiffer>
    <experiments>2</experiments>
</comment>
<comment type="interaction">
    <interactant intactId="EBI-79452">
        <id>P07948</id>
    </interactant>
    <interactant intactId="EBI-8346984">
        <id>Q08857</id>
        <label>Cd36</label>
    </interactant>
    <organismsDiffer>true</organismsDiffer>
    <experiments>2</experiments>
</comment>
<comment type="interaction">
    <interactant intactId="EBI-79452">
        <id>P07948</id>
    </interactant>
    <interactant intactId="EBI-710506">
        <id>O92972</id>
    </interactant>
    <organismsDiffer>true</organismsDiffer>
    <experiments>2</experiments>
</comment>
<comment type="interaction">
    <interactant intactId="EBI-79452">
        <id>P07948</id>
    </interactant>
    <interactant intactId="EBI-866709">
        <id>P22575</id>
    </interactant>
    <organismsDiffer>true</organismsDiffer>
    <experiments>3</experiments>
</comment>
<comment type="interaction">
    <interactant intactId="EBI-79452">
        <id>P07948</id>
    </interactant>
    <interactant intactId="EBI-706378">
        <id>P27958</id>
    </interactant>
    <organismsDiffer>true</organismsDiffer>
    <experiments>4</experiments>
</comment>
<comment type="interaction">
    <interactant intactId="EBI-79452">
        <id>P07948</id>
    </interactant>
    <interactant intactId="EBI-710918">
        <id>Q9WMX2</id>
    </interactant>
    <organismsDiffer>true</organismsDiffer>
    <experiments>3</experiments>
</comment>
<comment type="interaction">
    <interactant intactId="EBI-6895930">
        <id>P07948-1</id>
    </interactant>
    <interactant intactId="EBI-297353">
        <id>P00533</id>
        <label>EGFR</label>
    </interactant>
    <organismsDiffer>false</organismsDiffer>
    <experiments>2</experiments>
</comment>
<comment type="interaction">
    <interactant intactId="EBI-6895930">
        <id>P07948-1</id>
    </interactant>
    <interactant intactId="EBI-355924">
        <id>P33993</id>
        <label>MCM7</label>
    </interactant>
    <organismsDiffer>false</organismsDiffer>
    <experiments>5</experiments>
</comment>
<comment type="subcellular location">
    <subcellularLocation>
        <location>Cell membrane</location>
    </subcellularLocation>
    <subcellularLocation>
        <location>Nucleus</location>
    </subcellularLocation>
    <subcellularLocation>
        <location>Cytoplasm</location>
    </subcellularLocation>
    <subcellularLocation>
        <location>Cytoplasm</location>
        <location>Perinuclear region</location>
    </subcellularLocation>
    <subcellularLocation>
        <location>Golgi apparatus</location>
    </subcellularLocation>
    <subcellularLocation>
        <location evidence="57">Membrane</location>
        <topology evidence="57">Lipid-anchor</topology>
    </subcellularLocation>
    <text>Accumulates in the nucleus by inhibition of CRM1-mediated nuclear export. Nuclear accumulation is increased by inhibition of its kinase activity. The trafficking from the Golgi apparatus to the plasma membrane occurs in a kinase domain-dependent but kinase activity independent manner and is mediated by exocytic vesicular transport. Detected on plasma membrane lipid rafts.</text>
</comment>
<comment type="alternative products">
    <event type="alternative splicing"/>
    <isoform>
        <id>P07948-1</id>
        <name>1</name>
        <name>LYN A</name>
        <name>p56lyn</name>
        <sequence type="displayed"/>
    </isoform>
    <isoform>
        <id>P07948-2</id>
        <name>2</name>
        <name>LYN B</name>
        <name>p53lyn</name>
        <sequence type="described" ref="VSP_005002"/>
    </isoform>
</comment>
<comment type="tissue specificity">
    <text evidence="43 50">Detected in monocytes (at protein level). Detected in placenta, and in fetal brain, lung, liver and kidney. Widely expressed in a variety of organs, tissues, and cell types such as epidermoid, hematopoietic, and neuronal cells. Expressed in primary neuroblastoma tumors.</text>
</comment>
<comment type="domain">
    <text evidence="19">The protein kinase domain plays an important role in its localization in the cell membrane.</text>
</comment>
<comment type="PTM">
    <text evidence="24 40">Ubiquitinated by CBL, leading to its degradation. Ubiquitination is SH3-dependent.</text>
</comment>
<comment type="PTM">
    <text evidence="1 24 29 30 49 50 51 52 54">Autophosphorylated (PubMed:18056483, PubMed:18070987, PubMed:7935444, PubMed:9171348, PubMed:9341198). Phosphorylated on tyrosine residues in response to KIT signaling (PubMed:9341198). Phosphorylation at Tyr-397 is required for optimal activity (PubMed:16920712). Phosphorylation at Tyr-508 inhibits kinase activity (PubMed:9171348). Phosphorylated at Tyr-508 by CSK (PubMed:7935444). Dephosphorylated by PTPRC/CD45 (By similarity). Becomes rapidly phosphorylated upon activation of the B-cell receptor and the immunoglobulin receptor FCGR1A (PubMed:8064233). Phosphorylated in response to ITGB1 in B-cells (PubMed:9020138).</text>
</comment>
<comment type="disease" evidence="24 44 45 55">
    <disease id="DI-06688">
        <name>Autoinflammatory disease, systemic, with vasculitis</name>
        <acronym>SAIDV</acronym>
        <description>An autosomal dominant disorder characterized by systemic autoinflammation manifesting in the first hours of life with diffuse purpuric skin lesions, fever, hepatosplenomegaly, and increased C-reactive protein. Additional clinical features include periorbital edema, conjunctivitis, urticaria, atopic dermatitis, abdominal pain, and arthralgia. Laboratory studies may show leukocytosis, thrombocytopenia, and autoantibodies.</description>
        <dbReference type="MIM" id="620376"/>
    </disease>
    <text>The disease is caused by variants affecting the gene represented in this entry.</text>
</comment>
<comment type="disease">
    <text>Constitutively phosphorylated and activated in cells from a number of chronic myelogenous leukemia (CML) and acute myeloid leukemia (AML) patients. Mediates phosphorylation of the BCR-ABL fusion protein. Abnormally elevated expression levels or activation of LYN signaling may play a role in survival and proliferation of some types of cancer cells.</text>
</comment>
<comment type="similarity">
    <text evidence="2">Belongs to the protein kinase superfamily. Tyr protein kinase family. SRC subfamily.</text>
</comment>
<gene>
    <name type="primary">LYN</name>
    <name type="synonym">JTK8</name>
</gene>
<reference key="1">
    <citation type="journal article" date="1987" name="Mol. Cell. Biol.">
        <title>The yes-related cellular gene lyn encodes a possible tyrosine kinase similar to p56lck.</title>
        <authorList>
            <person name="Yamanashi Y."/>
            <person name="Fukushige S."/>
            <person name="Semba K."/>
            <person name="Sukegawa J."/>
            <person name="Miyajima N."/>
            <person name="Matsubara K."/>
            <person name="Yamamoto T."/>
            <person name="Toyoshima K."/>
        </authorList>
    </citation>
    <scope>NUCLEOTIDE SEQUENCE [MRNA] (ISOFORM 1)</scope>
    <scope>TISSUE SPECIFICITY</scope>
</reference>
<reference key="2">
    <citation type="journal article" date="1994" name="Gene">
        <title>The cDNAs encoding two forms of the LYN protein tyrosine kinase are expressed in rat mast cells and human myeloid cells.</title>
        <authorList>
            <person name="Rider L.G."/>
            <person name="Raben N."/>
            <person name="Miller L."/>
            <person name="Jelsema C."/>
        </authorList>
    </citation>
    <scope>NUCLEOTIDE SEQUENCE [MRNA] (ISOFORM 2)</scope>
    <scope>ALTERNATIVE SPLICING</scope>
</reference>
<reference key="3">
    <citation type="journal article" date="2004" name="Genome Res.">
        <title>The status, quality, and expansion of the NIH full-length cDNA project: the Mammalian Gene Collection (MGC).</title>
        <authorList>
            <consortium name="The MGC Project Team"/>
        </authorList>
    </citation>
    <scope>NUCLEOTIDE SEQUENCE [LARGE SCALE MRNA] (ISOFORM 1)</scope>
</reference>
<reference key="4">
    <citation type="journal article" date="1990" name="Proc. Natl. Acad. Sci. U.S.A.">
        <title>Putative tyrosine kinases expressed in K-562 human leukemia cells.</title>
        <authorList>
            <person name="Partanen J."/>
            <person name="Maekelae T.P."/>
            <person name="Alitalo R."/>
            <person name="Lehvaeslaiho H."/>
            <person name="Alitalo K."/>
        </authorList>
    </citation>
    <scope>NUCLEOTIDE SEQUENCE [MRNA] OF 369-424</scope>
</reference>
<reference key="5">
    <citation type="journal article" date="1992" name="Biochem. Biophys. Res. Commun.">
        <title>Expression of the B cell-associated tyrosine kinase gene Lyn in primary neuroblastoma tumours and its modulation during the differentiation of neuroblastoma cell lines.</title>
        <authorList>
            <person name="Bielke W."/>
            <person name="Ziemiecki A."/>
            <person name="Kappos L."/>
            <person name="Miescher G.C."/>
        </authorList>
    </citation>
    <scope>NUCLEOTIDE SEQUENCE [MRNA] OF 369-424</scope>
</reference>
<reference key="6">
    <citation type="journal article" date="1993" name="Biochem. Biophys. Res. Commun.">
        <title>CD19 is a substrate of the antigen receptor-associated protein tyrosine kinase in human B cells.</title>
        <authorList>
            <person name="Roifman C.M."/>
            <person name="Ke S."/>
        </authorList>
    </citation>
    <scope>FUNCTION IN CD19 PHOSPHORYLATION</scope>
    <scope>INTERACTION WITH CD19</scope>
</reference>
<reference key="7">
    <citation type="journal article" date="1993" name="Proc. Natl. Acad. Sci. U.S.A.">
        <title>Identification of HS1 protein as a major substrate of protein-tyrosine kinase(s) upon B-cell antigen receptor-mediated signaling.</title>
        <authorList>
            <person name="Yamanashi Y."/>
            <person name="Okada M."/>
            <person name="Semba T."/>
            <person name="Yamori T."/>
            <person name="Umemori H."/>
            <person name="Tsunasawa S."/>
            <person name="Toyoshima K."/>
            <person name="Kitamura D."/>
            <person name="Watanabe T."/>
            <person name="Yamamoto T."/>
        </authorList>
    </citation>
    <scope>CATALYTIC ACTIVITY</scope>
    <scope>AUTOPHOSPHORYLATION</scope>
    <scope>INTERACTION WITH HCLS1</scope>
</reference>
<reference key="8">
    <citation type="journal article" date="1994" name="J. Exp. Med.">
        <title>Physical and functional association of the high affinity immunoglobulin G receptor (Fc gamma RI) with the kinases Hck and Lyn.</title>
        <authorList>
            <person name="Wang A.V."/>
            <person name="Scholl P.R."/>
            <person name="Geha R.S."/>
        </authorList>
    </citation>
    <scope>INTERACTION WITH FCGR1A</scope>
    <scope>CATALYTIC ACTIVITY</scope>
    <scope>TISSUE SPECIFICITY</scope>
    <scope>PHOSPHORYLATION</scope>
</reference>
<reference key="9">
    <citation type="journal article" date="1994" name="Mol. Cell. Biol.">
        <title>Functional analysis of Csk in signal transduction through the B-cell antigen receptor.</title>
        <authorList>
            <person name="Hata A."/>
            <person name="Sabe H."/>
            <person name="Kurosaki T."/>
            <person name="Takata M."/>
            <person name="Hanafusa H."/>
        </authorList>
    </citation>
    <scope>PHOSPHORYLATION AT TYR-397 AND TYR-508</scope>
    <scope>ACTIVITY REGULATION</scope>
</reference>
<reference key="10">
    <citation type="journal article" date="1995" name="Immunity">
        <title>Integral membrane protein 2 of Epstein-Barr virus regulates reactivation from latency through dominant negative effects on protein-tyrosine kinases.</title>
        <authorList>
            <person name="Miller C.L."/>
            <person name="Burkhardt A.L."/>
            <person name="Lee J.H."/>
            <person name="Stealey B."/>
            <person name="Longnecker R."/>
            <person name="Bolen J.B."/>
            <person name="Kieff E."/>
        </authorList>
    </citation>
    <scope>INTERACTION WITH EPSTEIN-BARR VIRUS LMP2A (MICROBIAL INFECTION)</scope>
</reference>
<reference key="11">
    <citation type="journal article" date="1997" name="EMBO J.">
        <title>Translocation of the Csk homologous kinase (Chk/Hyl) controls activity of CD36-anchored Lyn tyrosine kinase in thrombin-stimulated platelets.</title>
        <authorList>
            <person name="Hirao A."/>
            <person name="Hamaguchi I."/>
            <person name="Suda T."/>
            <person name="Yamaguchi N."/>
        </authorList>
    </citation>
    <scope>PHOSPHORYLATION AT TYR-508 BY MATK</scope>
    <source>
        <tissue>Platelet</tissue>
    </source>
</reference>
<reference key="12">
    <citation type="journal article" date="1997" name="J. Biol. Chem.">
        <title>Involvement of p130(Cas) and p105(HEF1), a novel Cas-like docking protein, in a cytoskeleton-dependent signaling pathway initiated by ligation of integrin or antigen receptor on human B cells.</title>
        <authorList>
            <person name="Manie S.N."/>
            <person name="Beck A.R.P."/>
            <person name="Astier A."/>
            <person name="Law S.F."/>
            <person name="Canty T."/>
            <person name="Hirai H."/>
            <person name="Druker B.J."/>
            <person name="Avraham H."/>
            <person name="Haghayeghi N."/>
            <person name="Sattler M."/>
            <person name="Salgia R."/>
            <person name="Griffin J.D."/>
            <person name="Golemis E.A."/>
            <person name="Freedman A.S."/>
        </authorList>
    </citation>
    <scope>FUNCTION</scope>
    <scope>INTERACTION WITH NEDD9 AND BCAR1</scope>
    <scope>PHOSPHORYLATION</scope>
</reference>
<reference key="13">
    <citation type="journal article" date="1997" name="Immunol. Lett.">
        <title>Fc gamma receptor type IIb induced recruitment of inositol and protein phosphatases to the signal transductory complex of human B-cell.</title>
        <authorList>
            <person name="Sarmay G."/>
            <person name="Koncz G."/>
            <person name="Pecht I."/>
            <person name="Gergely J."/>
        </authorList>
    </citation>
    <scope>INTERACTION WITH FCGR2B</scope>
</reference>
<reference key="14">
    <citation type="journal article" date="1997" name="J. Biol. Chem.">
        <title>Lyn associates with the juxtamembrane region of c-Kit and is activated by stem cell factor in hematopoietic cell lines and normal progenitor cells.</title>
        <authorList>
            <person name="Linnekin D."/>
            <person name="DeBerry C.S."/>
            <person name="Mou S."/>
        </authorList>
    </citation>
    <scope>INTERACTION WITH KIT</scope>
    <scope>PHOSPHORYLATION</scope>
</reference>
<reference key="15">
    <citation type="journal article" date="1999" name="J. Biol. Chem.">
        <title>Functional interaction between SHPTP1 and the Lyn tyrosine kinase in the apoptotic response to DNA damage.</title>
        <authorList>
            <person name="Yoshida K."/>
            <person name="Kharbanda S."/>
            <person name="Kufe D."/>
        </authorList>
    </citation>
    <scope>FUNCTION IN DNA DAMAGE RESPONSE; APOPTOSIS AND PHOSPHORYLATION OF PTPN6/SHPTP1</scope>
    <scope>INTERACTION WITH PTPN6/SHPTP1</scope>
</reference>
<reference key="16">
    <citation type="journal article" date="1999" name="Oncogene">
        <title>cbl-3: a new mammalian cbl family protein.</title>
        <authorList>
            <person name="Keane M.M."/>
            <person name="Ettenberg S.A."/>
            <person name="Nau M.M."/>
            <person name="Banerjee P."/>
            <person name="Cuello M."/>
            <person name="Penninger J."/>
            <person name="Lipkowitz S."/>
        </authorList>
    </citation>
    <scope>INTERACTION WITH CBLC</scope>
</reference>
<reference key="17">
    <citation type="journal article" date="2000" name="J. Biol. Chem.">
        <title>Substrate recognition by the Lyn protein-tyrosine kinase. NMR structure of the immunoreceptor tyrosine-based activation motif signaling region of the B cell antigen receptor.</title>
        <authorList>
            <person name="Gaul B.S."/>
            <person name="Harrison M.L."/>
            <person name="Geahlen R.L."/>
            <person name="Burton R.A."/>
            <person name="Post C.B."/>
        </authorList>
    </citation>
    <scope>FUNCTION IN CD79A PHOSPHORYLATION</scope>
    <scope>INTERACTION WITH CD79A</scope>
</reference>
<reference key="18">
    <citation type="journal article" date="2001" name="Blood">
        <title>Lyn is required for normal stem cell factor-induced proliferation and chemotaxis of primary hematopoietic cells.</title>
        <authorList>
            <person name="O'Laughlin-Bunner B."/>
            <person name="Radosevic N."/>
            <person name="Taylor M.L."/>
            <person name="Shivakrupa R."/>
            <person name="DeBerry C."/>
            <person name="Metcalfe D.D."/>
            <person name="Zhou M."/>
            <person name="Lowell C."/>
            <person name="Linnekin D."/>
        </authorList>
    </citation>
    <scope>FUNCTION IN REGULATION OF MAST CELL PROLIFERATION</scope>
    <scope>MUTAGENESIS OF LYS-275</scope>
</reference>
<reference key="19">
    <citation type="journal article" date="2001" name="Mol. Pharmacol.">
        <title>Molecular cloning, genomic positioning, promoter identification, and characterization of the novel cyclic AMP-specific phosphodiesterase PDE4A10.</title>
        <authorList>
            <person name="Rena G."/>
            <person name="Begg F."/>
            <person name="Ross A."/>
            <person name="MacKenzie C."/>
            <person name="McPhee I."/>
            <person name="Campbell L."/>
            <person name="Huston E."/>
            <person name="Sullivan M."/>
            <person name="Houslay M.D."/>
        </authorList>
    </citation>
    <scope>INTERACTION WITH PDE4A</scope>
    <source>
        <tissue>Brain</tissue>
    </source>
</reference>
<reference key="20">
    <citation type="journal article" date="2000" name="Mol. Cell. Biol.">
        <title>Role for Lyn tyrosine kinase as a regulator of stress-activated protein kinase activity in response to DNA damage.</title>
        <authorList>
            <person name="Yoshida K."/>
            <person name="Weichselbaum R."/>
            <person name="Kharbanda S."/>
            <person name="Kufe D."/>
        </authorList>
    </citation>
    <scope>FUNCTION</scope>
</reference>
<reference key="21">
    <citation type="journal article" date="2001" name="Proc. Natl. Acad. Sci. U.S.A.">
        <title>Interaction between growth arrest-DNA damage protein 34 and Src kinase Lyn negatively regulates genotoxic apoptosis.</title>
        <authorList>
            <person name="Grishin A.V."/>
            <person name="Azhipa O."/>
            <person name="Semenov I."/>
            <person name="Corey S.J."/>
        </authorList>
    </citation>
    <scope>FUNCTION IN DNA DAMAGE RESPONSE; APOPTOSIS AND PHOSPHORYLATION OF PPP1R15A</scope>
    <scope>INTERACTION WITH PPP1R15A</scope>
    <scope>CATALYTIC ACTIVITY</scope>
    <scope>MUTAGENESIS OF LYS-275</scope>
</reference>
<reference key="22">
    <citation type="journal article" date="2002" name="J. Biol. Chem.">
        <title>Phosphatidylinositol 3-kinase and Src family kinases are required for phosphorylation and membrane recruitment of Dok-1 in c-Kit signaling.</title>
        <authorList>
            <person name="Liang X."/>
            <person name="Wisniewski D."/>
            <person name="Strife A."/>
            <person name="Shivakrupa R."/>
            <person name="Clarkson B."/>
            <person name="Resh M.D."/>
        </authorList>
    </citation>
    <scope>FUNCTION IN PHOSPHORYLATION OF KIT AND DOK1</scope>
    <scope>CATALYTIC ACTIVITY</scope>
    <scope>INTERACTION WITH KIT</scope>
</reference>
<reference key="23">
    <citation type="journal article" date="2003" name="Cancer Biol. Ther.">
        <title>DF3/MUC1 signaling in multiple myeloma cells is regulated by interleukin-7.</title>
        <authorList>
            <person name="Li Y."/>
            <person name="Chen W."/>
            <person name="Ren J."/>
            <person name="Yu W.H."/>
            <person name="Li Q."/>
            <person name="Yoshida K."/>
            <person name="Kufe D."/>
        </authorList>
    </citation>
    <scope>INTERACTION WITH MUC1</scope>
</reference>
<reference key="24">
    <citation type="journal article" date="2003" name="J. Biol. Chem.">
        <title>Identification of UNC119 as a novel activator of SRC-type tyrosine kinases.</title>
        <authorList>
            <person name="Cen O."/>
            <person name="Gorska M.M."/>
            <person name="Stafford S.J."/>
            <person name="Sur S."/>
            <person name="Alam R."/>
        </authorList>
    </citation>
    <scope>INTERACTION WITH UNC119</scope>
</reference>
<reference key="25">
    <citation type="journal article" date="2004" name="Blood">
        <title>Lyn tyrosine kinase regulates thrombopoietin-induced proliferation of hematopoietic cell lines and primary megakaryocytic progenitors.</title>
        <authorList>
            <person name="Lannutti B.J."/>
            <person name="Drachman J.G."/>
        </authorList>
    </citation>
    <scope>FUNCTION IN THPO-MEDIATED CELL PROLIFERATION</scope>
</reference>
<reference key="26">
    <citation type="journal article" date="2004" name="J. Cell Biol.">
        <title>Trafficking of Lyn through the Golgi caveolin involves the charged residues on alphaE and alphaI helices in the kinase domain.</title>
        <authorList>
            <person name="Kasahara K."/>
            <person name="Nakayama Y."/>
            <person name="Ikeda K."/>
            <person name="Fukushima Y."/>
            <person name="Matsuda D."/>
            <person name="Horimoto S."/>
            <person name="Yamaguchi N."/>
        </authorList>
    </citation>
    <scope>SUBCELLULAR LOCATION</scope>
    <scope>DOMAIN</scope>
    <scope>MUTAGENESIS OF LYS-275; ASP-346; GLU-353; ASP-498 AND ASP-499</scope>
</reference>
<reference key="27">
    <citation type="journal article" date="2005" name="Biochem. Biophys. Res. Commun.">
        <title>Signaling by Kit protein-tyrosine kinase--the stem cell factor receptor.</title>
        <authorList>
            <person name="Roskoski R. Jr."/>
        </authorList>
    </citation>
    <scope>REVIEW ON ROLE IN KIT SIGNALING</scope>
</reference>
<reference key="28">
    <citation type="journal article" date="2005" name="J. Biol. Chem.">
        <title>Thrombin-induced tyrosine phosphorylation of HS1 in human platelets is sequentially catalyzed by Syk and Lyn tyrosine kinases and associated with the cellular migration of the protein.</title>
        <authorList>
            <person name="Brunati A.M."/>
            <person name="Deana R."/>
            <person name="Folda A."/>
            <person name="Massimino M.L."/>
            <person name="Marin O."/>
            <person name="Ledro S."/>
            <person name="Pinna L.A."/>
            <person name="Donella-Deana A."/>
        </authorList>
    </citation>
    <scope>FUNCTION IN PHOSPHORYLATION OF HCLS1</scope>
</reference>
<reference key="29">
    <citation type="journal article" date="2005" name="Nat. Biotechnol.">
        <title>Immunoaffinity profiling of tyrosine phosphorylation in cancer cells.</title>
        <authorList>
            <person name="Rush J."/>
            <person name="Moritz A."/>
            <person name="Lee K.A."/>
            <person name="Guo A."/>
            <person name="Goss V.L."/>
            <person name="Spek E.J."/>
            <person name="Zhang H."/>
            <person name="Zha X.-M."/>
            <person name="Polakiewicz R.D."/>
            <person name="Comb M.J."/>
        </authorList>
    </citation>
    <scope>PHOSPHORYLATION [LARGE SCALE ANALYSIS] AT TYR-508</scope>
    <scope>IDENTIFICATION BY MASS SPECTROMETRY [LARGE SCALE ANALYSIS]</scope>
</reference>
<reference key="30">
    <citation type="journal article" date="2006" name="Blood">
        <title>Integrin inhibition through Lyn-dependent cross talk from CXCR4 chemokine receptors in normal human CD34+ marrow cells.</title>
        <authorList>
            <person name="Nakata Y."/>
            <person name="Tomkowicz B."/>
            <person name="Gewirtz A.M."/>
            <person name="Ptasznik A."/>
        </authorList>
    </citation>
    <scope>FUNCTION</scope>
</reference>
<reference key="31">
    <citation type="journal article" date="2006" name="J. Biol. Chem.">
        <title>Src family kinases phosphorylate the Bcr-Abl SH3-SH2 region and modulate Bcr-Abl transforming activity.</title>
        <authorList>
            <person name="Meyn M.A. III"/>
            <person name="Wilson M.B."/>
            <person name="Abdi F.A."/>
            <person name="Fahey N."/>
            <person name="Schiavone A.P."/>
            <person name="Wu J."/>
            <person name="Hochrein J.M."/>
            <person name="Engen J.R."/>
            <person name="Smithgall T.E."/>
        </authorList>
    </citation>
    <scope>INTERACTION WITH ABL1</scope>
</reference>
<reference key="32">
    <citation type="journal article" date="2006" name="J. Biol. Chem.">
        <title>Csk-binding protein mediates sequential enzymatic down-regulation and degradation of Lyn in erythropoietin-stimulated cells.</title>
        <authorList>
            <person name="Ingley E."/>
            <person name="Schneider J.R."/>
            <person name="Payne C.J."/>
            <person name="McCarthy D.J."/>
            <person name="Harder K.W."/>
            <person name="Hibbs M.L."/>
            <person name="Klinken S.P."/>
        </authorList>
    </citation>
    <scope>INTERACTION WITH PAG1</scope>
    <scope>MUTAGENESIS OF TYR-397</scope>
    <scope>CHARACTERIZATION OF VARIANT SAIDV PHE-508</scope>
    <scope>ACTIVITY REGULATION</scope>
    <scope>UBIQUITINATION</scope>
</reference>
<reference key="33">
    <citation type="journal article" date="2007" name="Biochem. J.">
        <title>Paxillin family members function as Csk-binding proteins that regulate Lyn activity in human and murine platelets.</title>
        <authorList>
            <person name="Rathore V.B."/>
            <person name="Okada M."/>
            <person name="Newman P.J."/>
            <person name="Newman D.K."/>
        </authorList>
    </citation>
    <scope>INTERACTION WITH TGFB1I1</scope>
</reference>
<reference key="34">
    <citation type="journal article" date="2007" name="J. Biol. Chem.">
        <title>Leupaxin negatively regulates B cell receptor signaling.</title>
        <authorList>
            <person name="Chew V."/>
            <person name="Lam K.P."/>
        </authorList>
    </citation>
    <scope>FUNCTION IN PHOSPHORYLATION OF LPXN</scope>
    <scope>INTERACTION WITH LPXN</scope>
</reference>
<reference key="35">
    <citation type="journal article" date="2007" name="J. Biol. Chem.">
        <title>TOM1L1 is a Lyn substrate involved in FcepsilonRI signaling in mast cells.</title>
        <authorList>
            <person name="Zhang J."/>
            <person name="Suzuki K."/>
            <person name="Hitomi T."/>
            <person name="Siraganian R.P."/>
        </authorList>
    </citation>
    <scope>INTERACTION WITH TOM1L1</scope>
    <scope>FUNCTION IN TOM1L1 PHOSPHORYLATION</scope>
</reference>
<reference key="36">
    <citation type="journal article" date="2008" name="Blood">
        <title>A critical role for Lyn in acute myeloid leukemia.</title>
        <authorList>
            <person name="Dos Santos C."/>
            <person name="Demur C."/>
            <person name="Bardet V."/>
            <person name="Prade-Houdellier N."/>
            <person name="Payrastre B."/>
            <person name="Recher C."/>
        </authorList>
    </citation>
    <scope>FUNCTION IN CELL PROLIFERATION AND SURVIVAL</scope>
    <scope>PHOSPHORYLATION</scope>
    <scope>SUBCELLULAR LOCATION</scope>
    <scope>ROLE IN DISEASE</scope>
</reference>
<reference key="37">
    <citation type="journal article" date="2008" name="Blood">
        <title>Oncogenic association of the Cbp/PAG adaptor protein with the Lyn tyrosine kinase in human B-NHL rafts.</title>
        <authorList>
            <person name="Tauzin S."/>
            <person name="Ding H."/>
            <person name="Khatib K."/>
            <person name="Ahmad I."/>
            <person name="Burdevet D."/>
            <person name="van Echten-Deckert G."/>
            <person name="Lindquist J.A."/>
            <person name="Schraven B."/>
            <person name="Din N.U."/>
            <person name="Borisch B."/>
            <person name="Hoessli D.C."/>
        </authorList>
    </citation>
    <scope>FUNCTION</scope>
    <scope>PHOSPHORYLATION AT TYR-397 AND TYR-508</scope>
    <scope>INTERACTION WITH PAG1 AND STAT3</scope>
    <scope>SUBCELLULAR LOCATION</scope>
</reference>
<reference key="38">
    <citation type="journal article" date="2008" name="Blood">
        <title>Lyn regulates BCR-ABL and Gab2 tyrosine phosphorylation and c-Cbl protein stability in imatinib-resistant chronic myelogenous leukemia cells.</title>
        <authorList>
            <person name="Wu J."/>
            <person name="Meng F."/>
            <person name="Lu H."/>
            <person name="Kong L."/>
            <person name="Bornmann W."/>
            <person name="Peng Z."/>
            <person name="Talpaz M."/>
            <person name="Donato N.J."/>
        </authorList>
    </citation>
    <scope>INTERACTION WITH CBL AND BCR-ABL</scope>
    <scope>FUNCTION IN PHOSPHORYLATION OF BCR-ABL</scope>
    <scope>ROLE IN DISEASE</scope>
</reference>
<reference key="39">
    <citation type="journal article" date="2008" name="Exp. Cell Res.">
        <title>Nuclear localization of Lyn tyrosine kinase mediated by inhibition of its kinase activity.</title>
        <authorList>
            <person name="Ikeda K."/>
            <person name="Nakayama Y."/>
            <person name="Togashi Y."/>
            <person name="Obata Y."/>
            <person name="Kuga T."/>
            <person name="Kasahara K."/>
            <person name="Fukumoto Y."/>
            <person name="Yamaguchi N."/>
        </authorList>
    </citation>
    <scope>SUBCELLULAR LOCATION</scope>
    <scope>MYRISTOYLATION AT GLY-2</scope>
    <scope>PALMITOYLATION AT CYS-3</scope>
    <scope>MUTAGENESIS OF GLY-2; CYS-3 AND LYS-275</scope>
</reference>
<reference key="40">
    <citation type="journal article" date="2008" name="J. Immunol.">
        <title>Monocyte migration and LFA-1-mediated attachment to brain microvascular endothelia is regulated by SDF-1 alpha through Lyn kinase.</title>
        <authorList>
            <person name="Malik M."/>
            <person name="Chen Y.-Y."/>
            <person name="Kienzle M.F."/>
            <person name="Tomkowicz B.E."/>
            <person name="Collman R.G."/>
            <person name="Ptasznik A."/>
        </authorList>
    </citation>
    <scope>FUNCTION IN ADHESION AND CELL MIGRATION</scope>
</reference>
<reference key="41">
    <citation type="journal article" date="2008" name="J. Natl. Cancer Inst.">
        <title>Association between imatinib-resistant BCR-ABL mutation-negative leukemia and persistent activation of LYN kinase.</title>
        <authorList>
            <person name="Wu J."/>
            <person name="Meng F."/>
            <person name="Kong L.Y."/>
            <person name="Peng Z."/>
            <person name="Ying Y."/>
            <person name="Bornmann W.G."/>
            <person name="Darnay B.G."/>
            <person name="Lamothe B."/>
            <person name="Sun H."/>
            <person name="Talpaz M."/>
            <person name="Donato N.J."/>
        </authorList>
    </citation>
    <scope>PHOSPHORYLATION AT TYR-193 AND TYR-460</scope>
    <scope>ROLE IN DISEASE</scope>
</reference>
<reference key="42">
    <citation type="journal article" date="2008" name="J. Proteome Res.">
        <title>Phosphoproteome of resting human platelets.</title>
        <authorList>
            <person name="Zahedi R.P."/>
            <person name="Lewandrowski U."/>
            <person name="Wiesner J."/>
            <person name="Wortelkamp S."/>
            <person name="Moebius J."/>
            <person name="Schuetz C."/>
            <person name="Walter U."/>
            <person name="Gambaryan S."/>
            <person name="Sickmann A."/>
        </authorList>
    </citation>
    <scope>IDENTIFICATION BY MASS SPECTROMETRY [LARGE SCALE ANALYSIS]</scope>
    <source>
        <tissue>Platelet</tissue>
    </source>
</reference>
<reference key="43">
    <citation type="journal article" date="2008" name="Mol. Cell">
        <title>Kinase-selective enrichment enables quantitative phosphoproteomics of the kinome across the cell cycle.</title>
        <authorList>
            <person name="Daub H."/>
            <person name="Olsen J.V."/>
            <person name="Bairlein M."/>
            <person name="Gnad F."/>
            <person name="Oppermann F.S."/>
            <person name="Korner R."/>
            <person name="Greff Z."/>
            <person name="Keri G."/>
            <person name="Stemmann O."/>
            <person name="Mann M."/>
        </authorList>
    </citation>
    <scope>PHOSPHORYLATION [LARGE SCALE ANALYSIS] AT SER-11; SER-13; TYR-473 AND TYR-508</scope>
    <scope>IDENTIFICATION BY MASS SPECTROMETRY [LARGE SCALE ANALYSIS]</scope>
    <source>
        <tissue>Cervix carcinoma</tissue>
    </source>
</reference>
<reference key="44">
    <citation type="journal article" date="2008" name="Proc. Natl. Acad. Sci. U.S.A.">
        <title>A quantitative atlas of mitotic phosphorylation.</title>
        <authorList>
            <person name="Dephoure N."/>
            <person name="Zhou C."/>
            <person name="Villen J."/>
            <person name="Beausoleil S.A."/>
            <person name="Bakalarski C.E."/>
            <person name="Elledge S.J."/>
            <person name="Gygi S.P."/>
        </authorList>
    </citation>
    <scope>IDENTIFICATION BY MASS SPECTROMETRY [LARGE SCALE ANALYSIS]</scope>
    <source>
        <tissue>Cervix carcinoma</tissue>
    </source>
</reference>
<reference key="45">
    <citation type="journal article" date="2009" name="BMC Immunol.">
        <title>Identification of SH3 domain interaction partners of human FasL (CD178) by phage display screening.</title>
        <authorList>
            <person name="Voss M."/>
            <person name="Lettau M."/>
            <person name="Janssen O."/>
        </authorList>
    </citation>
    <scope>INTERACTION WITH FASLG</scope>
</reference>
<reference key="46">
    <citation type="journal article" date="2009" name="J. Cell. Biochem.">
        <title>Alternative splicing of ADAM15 regulates its interactions with cellular SH3 proteins.</title>
        <authorList>
            <person name="Kleino I."/>
            <person name="Ortiz R.M."/>
            <person name="Yritys M."/>
            <person name="Huovila A.P."/>
            <person name="Saksela K."/>
        </authorList>
    </citation>
    <scope>INTERACTION WITH ADAM15</scope>
</reference>
<reference key="47">
    <citation type="journal article" date="2009" name="Mol. Cell. Proteomics">
        <title>Large-scale proteomics analysis of the human kinome.</title>
        <authorList>
            <person name="Oppermann F.S."/>
            <person name="Gnad F."/>
            <person name="Olsen J.V."/>
            <person name="Hornberger R."/>
            <person name="Greff Z."/>
            <person name="Keri G."/>
            <person name="Mann M."/>
            <person name="Daub H."/>
        </authorList>
    </citation>
    <scope>PHOSPHORYLATION [LARGE SCALE ANALYSIS] AT SER-11; SER-13; SER-228; TYR-306; TYR-316; TYR-473 AND TYR-508</scope>
    <scope>IDENTIFICATION BY MASS SPECTROMETRY [LARGE SCALE ANALYSIS]</scope>
</reference>
<reference key="48">
    <citation type="journal article" date="2010" name="Nat. Immunol.">
        <title>CD36 ligands promote sterile inflammation through assembly of a Toll-like receptor 4 and 6 heterodimer.</title>
        <authorList>
            <person name="Stewart C.R."/>
            <person name="Stuart L.M."/>
            <person name="Wilkinson K."/>
            <person name="van Gils J.M."/>
            <person name="Deng J."/>
            <person name="Halle A."/>
            <person name="Rayner K.J."/>
            <person name="Boyer L."/>
            <person name="Zhong R."/>
            <person name="Frazier W.A."/>
            <person name="Lacy-Hulbert A."/>
            <person name="El Khoury J."/>
            <person name="Golenbock D.T."/>
            <person name="Moore K.J."/>
        </authorList>
    </citation>
    <scope>FUNCTION IN LTR4 AND LTR6 HETERODIMERIZATION</scope>
    <scope>INTERACTION WITH CD36</scope>
</reference>
<reference key="49">
    <citation type="journal article" date="2010" name="Proc. Natl. Acad. Sci. U.S.A.">
        <title>Regulation of PTEN/Akt and MAP kinase signaling pathways by the ubiquitin ligase activators Ndfip1 and Ndfip2.</title>
        <authorList>
            <person name="Mund T."/>
            <person name="Pelham H.R."/>
        </authorList>
    </citation>
    <scope>INTERACTION WITH NDFIP1 AND NDFIP2</scope>
    <scope>UBIQUITINATION</scope>
</reference>
<reference key="50">
    <citation type="journal article" date="2010" name="Sci. Signal.">
        <title>Quantitative phosphoproteomics reveals widespread full phosphorylation site occupancy during mitosis.</title>
        <authorList>
            <person name="Olsen J.V."/>
            <person name="Vermeulen M."/>
            <person name="Santamaria A."/>
            <person name="Kumar C."/>
            <person name="Miller M.L."/>
            <person name="Jensen L.J."/>
            <person name="Gnad F."/>
            <person name="Cox J."/>
            <person name="Jensen T.S."/>
            <person name="Nigg E.A."/>
            <person name="Brunak S."/>
            <person name="Mann M."/>
        </authorList>
    </citation>
    <scope>PHOSPHORYLATION [LARGE SCALE ANALYSIS] AT SER-13</scope>
    <scope>IDENTIFICATION BY MASS SPECTROMETRY [LARGE SCALE ANALYSIS]</scope>
    <source>
        <tissue>Cervix carcinoma</tissue>
    </source>
</reference>
<reference key="51">
    <citation type="journal article" date="2011" name="Mol. Cell. Biol.">
        <title>SCIMP, a transmembrane adapter protein involved in major histocompatibility complex class II signaling.</title>
        <authorList>
            <person name="Draber P."/>
            <person name="Vonkova I."/>
            <person name="Stepanek O."/>
            <person name="Hrdinka M."/>
            <person name="Kucova M."/>
            <person name="Skopcova T."/>
            <person name="Otahal P."/>
            <person name="Angelisova P."/>
            <person name="Horejsi V."/>
            <person name="Yeung M."/>
            <person name="Weiss A."/>
            <person name="Brdicka T."/>
        </authorList>
    </citation>
    <scope>INTERACTION WITH SCIMP</scope>
</reference>
<reference key="52">
    <citation type="journal article" date="2004" name="Mol. Immunol.">
        <title>Src-family kinases: rheostats of immune cell signaling.</title>
        <authorList>
            <person name="Lowell C.A."/>
        </authorList>
    </citation>
    <scope>REVIEW</scope>
</reference>
<reference key="53">
    <citation type="journal article" date="2004" name="Oncogene">
        <title>Src-family kinases in B-cell development and signaling.</title>
        <authorList>
            <person name="Gauld S.B."/>
            <person name="Cambier J.C."/>
        </authorList>
    </citation>
    <scope>REVIEW ON ROLE IN B CELLS</scope>
</reference>
<reference key="54">
    <citation type="journal article" date="2005" name="Immunity">
        <title>Lyn tyrosine kinase: accentuating the positive and the negative.</title>
        <authorList>
            <person name="Xu Y."/>
            <person name="Harder K.W."/>
            <person name="Huntington N.D."/>
            <person name="Hibbs M.L."/>
            <person name="Tarlinton D.M."/>
        </authorList>
    </citation>
    <scope>REVIEW ON ROLE IN B CELLS</scope>
</reference>
<reference key="55">
    <citation type="journal article" date="2006" name="Growth Factors">
        <title>The duplicitous nature of the Lyn tyrosine kinase in growth factor signaling.</title>
        <authorList>
            <person name="Hibbs M.L."/>
            <person name="Harder K.W."/>
        </authorList>
    </citation>
    <scope>REVIEW ON ROLE IN GROWTH FACTOR SIGNALING</scope>
</reference>
<reference key="56">
    <citation type="journal article" date="2008" name="Adv. Immunol.">
        <title>New insights on mast cell activation via the high affinity receptor for IgE.</title>
        <authorList>
            <person name="Rivera J."/>
            <person name="Fierro N.A."/>
            <person name="Olivera A."/>
            <person name="Suzuki R."/>
        </authorList>
    </citation>
    <scope>REVIEW ON ROLE IN MAST CELLS</scope>
</reference>
<reference key="57">
    <citation type="journal article" date="2009" name="Immunol. Rev.">
        <title>Multiple roles of Lyn kinase in myeloid cell signaling and function.</title>
        <authorList>
            <person name="Scapini P."/>
            <person name="Pereira S."/>
            <person name="Zhang H."/>
            <person name="Lowell C.A."/>
        </authorList>
    </citation>
    <scope>ROLE IN MYELOID CELL FUNCTION</scope>
    <scope>SIGNALING</scope>
</reference>
<reference key="58">
    <citation type="journal article" date="2011" name="Sci. Signal.">
        <title>System-wide temporal characterization of the proteome and phosphoproteome of human embryonic stem cell differentiation.</title>
        <authorList>
            <person name="Rigbolt K.T."/>
            <person name="Prokhorova T.A."/>
            <person name="Akimov V."/>
            <person name="Henningsen J."/>
            <person name="Johansen P.T."/>
            <person name="Kratchmarova I."/>
            <person name="Kassem M."/>
            <person name="Mann M."/>
            <person name="Olsen J.V."/>
            <person name="Blagoev B."/>
        </authorList>
    </citation>
    <scope>PHOSPHORYLATION [LARGE SCALE ANALYSIS] AT SER-11 AND SER-13</scope>
    <scope>IDENTIFICATION BY MASS SPECTROMETRY [LARGE SCALE ANALYSIS]</scope>
</reference>
<reference key="59">
    <citation type="journal article" date="2013" name="J. Proteome Res.">
        <title>Toward a comprehensive characterization of a human cancer cell phosphoproteome.</title>
        <authorList>
            <person name="Zhou H."/>
            <person name="Di Palma S."/>
            <person name="Preisinger C."/>
            <person name="Peng M."/>
            <person name="Polat A.N."/>
            <person name="Heck A.J."/>
            <person name="Mohammed S."/>
        </authorList>
    </citation>
    <scope>PHOSPHORYLATION [LARGE SCALE ANALYSIS] AT SER-11 AND SER-13</scope>
    <scope>IDENTIFICATION BY MASS SPECTROMETRY [LARGE SCALE ANALYSIS]</scope>
    <source>
        <tissue>Cervix carcinoma</tissue>
        <tissue>Erythroleukemia</tissue>
    </source>
</reference>
<reference key="60">
    <citation type="journal article" date="2014" name="J. Proteomics">
        <title>An enzyme assisted RP-RPLC approach for in-depth analysis of human liver phosphoproteome.</title>
        <authorList>
            <person name="Bian Y."/>
            <person name="Song C."/>
            <person name="Cheng K."/>
            <person name="Dong M."/>
            <person name="Wang F."/>
            <person name="Huang J."/>
            <person name="Sun D."/>
            <person name="Wang L."/>
            <person name="Ye M."/>
            <person name="Zou H."/>
        </authorList>
    </citation>
    <scope>PHOSPHORYLATION [LARGE SCALE ANALYSIS] AT SER-11 AND SER-13</scope>
    <scope>IDENTIFICATION BY MASS SPECTROMETRY [LARGE SCALE ANALYSIS]</scope>
    <source>
        <tissue>Liver</tissue>
    </source>
</reference>
<reference key="61">
    <citation type="journal article" date="2014" name="Nat. Commun.">
        <title>Global profiling of co- and post-translationally N-myristoylated proteomes in human cells.</title>
        <authorList>
            <person name="Thinon E."/>
            <person name="Serwa R.A."/>
            <person name="Broncel M."/>
            <person name="Brannigan J.A."/>
            <person name="Brassat U."/>
            <person name="Wright M.H."/>
            <person name="Heal W.P."/>
            <person name="Wilkinson A.J."/>
            <person name="Mann D.J."/>
            <person name="Tate E.W."/>
        </authorList>
    </citation>
    <scope>MYRISTOYLATION AT GLY-2</scope>
    <scope>CLEAVAGE OF INITIATOR METHIONINE</scope>
    <scope>IDENTIFICATION BY MASS SPECTROMETRY</scope>
</reference>
<reference key="62">
    <citation type="journal article" date="2015" name="Proteomics">
        <title>N-terminome analysis of the human mitochondrial proteome.</title>
        <authorList>
            <person name="Vaca Jacome A.S."/>
            <person name="Rabilloud T."/>
            <person name="Schaeffer-Reiss C."/>
            <person name="Rompais M."/>
            <person name="Ayoub D."/>
            <person name="Lane L."/>
            <person name="Bairoch A."/>
            <person name="Van Dorsselaer A."/>
            <person name="Carapito C."/>
        </authorList>
    </citation>
    <scope>IDENTIFICATION BY MASS SPECTROMETRY [LARGE SCALE ANALYSIS]</scope>
</reference>
<reference key="63">
    <citation type="journal article" date="2002" name="Biochemistry">
        <title>Structural investigation of the binding of a herpesviral protein to the SH3 domain of tyrosine kinase Lck.</title>
        <authorList>
            <person name="Schweimer K."/>
            <person name="Hoffmann S."/>
            <person name="Bauer F."/>
            <person name="Friedrich U."/>
            <person name="Kardinal C."/>
            <person name="Feller S.M."/>
            <person name="Biesinger B."/>
            <person name="Sticht H."/>
        </authorList>
    </citation>
    <scope>STRUCTURE BY NMR OF 61-123 IN COMPLEX WITH SAIMIRIINE HERPESVIRUS 2 TYROSINE KINASE INTERACTING PROTEIN (MICROBIAL INFECTION)</scope>
</reference>
<reference key="64">
    <citation type="journal article" date="2005" name="Protein Sci.">
        <title>Structural characterization of Lyn-SH3 domain in complex with a herpesviral protein reveals an extended recognition motif that enhances binding affinity.</title>
        <authorList>
            <person name="Bauer F."/>
            <person name="Schweimer K."/>
            <person name="Meiselbach H."/>
            <person name="Hoffmann S."/>
            <person name="Rosch P."/>
            <person name="Sticht H."/>
        </authorList>
    </citation>
    <scope>STRUCTURE BY NMR OF 61-122</scope>
    <scope>INTERACTION WITH HERPESVIRUS TYROSINE KINASE INTERACTING PROTEIN (MICROBIAL INFECTION)</scope>
</reference>
<reference key="65">
    <citation type="journal article" date="2009" name="Bioorg. Med. Chem. Lett.">
        <title>Structural basis for the inhibitor recognition of human Lyn kinase domain.</title>
        <authorList>
            <person name="Miyano N."/>
            <person name="Kinoshita T."/>
            <person name="Nakai R."/>
            <person name="Kirii Y."/>
            <person name="Yokota K."/>
            <person name="Tada T."/>
        </authorList>
    </citation>
    <scope>X-RAY CRYSTALLOGRAPHY (3.0 ANGSTROMS) OF 233-512 IN COMPLEX WITH STAUROSPORINE</scope>
</reference>
<reference key="66">
    <citation type="journal article" date="2007" name="Nature">
        <title>Patterns of somatic mutation in human cancer genomes.</title>
        <authorList>
            <person name="Greenman C."/>
            <person name="Stephens P."/>
            <person name="Smith R."/>
            <person name="Dalgliesh G.L."/>
            <person name="Hunter C."/>
            <person name="Bignell G."/>
            <person name="Davies H."/>
            <person name="Teague J."/>
            <person name="Butler A."/>
            <person name="Stevens C."/>
            <person name="Edkins S."/>
            <person name="O'Meara S."/>
            <person name="Vastrik I."/>
            <person name="Schmidt E.E."/>
            <person name="Avis T."/>
            <person name="Barthorpe S."/>
            <person name="Bhamra G."/>
            <person name="Buck G."/>
            <person name="Choudhury B."/>
            <person name="Clements J."/>
            <person name="Cole J."/>
            <person name="Dicks E."/>
            <person name="Forbes S."/>
            <person name="Gray K."/>
            <person name="Halliday K."/>
            <person name="Harrison R."/>
            <person name="Hills K."/>
            <person name="Hinton J."/>
            <person name="Jenkinson A."/>
            <person name="Jones D."/>
            <person name="Menzies A."/>
            <person name="Mironenko T."/>
            <person name="Perry J."/>
            <person name="Raine K."/>
            <person name="Richardson D."/>
            <person name="Shepherd R."/>
            <person name="Small A."/>
            <person name="Tofts C."/>
            <person name="Varian J."/>
            <person name="Webb T."/>
            <person name="West S."/>
            <person name="Widaa S."/>
            <person name="Yates A."/>
            <person name="Cahill D.P."/>
            <person name="Louis D.N."/>
            <person name="Goldstraw P."/>
            <person name="Nicholson A.G."/>
            <person name="Brasseur F."/>
            <person name="Looijenga L."/>
            <person name="Weber B.L."/>
            <person name="Chiew Y.-E."/>
            <person name="DeFazio A."/>
            <person name="Greaves M.F."/>
            <person name="Green A.R."/>
            <person name="Campbell P."/>
            <person name="Birney E."/>
            <person name="Easton D.F."/>
            <person name="Chenevix-Trench G."/>
            <person name="Tan M.-H."/>
            <person name="Khoo S.K."/>
            <person name="Teh B.T."/>
            <person name="Yuen S.T."/>
            <person name="Leung S.Y."/>
            <person name="Wooster R."/>
            <person name="Futreal P.A."/>
            <person name="Stratton M.R."/>
        </authorList>
    </citation>
    <scope>VARIANT [LARGE SCALE ANALYSIS] TYR-385</scope>
</reference>
<reference key="67">
    <citation type="journal article" date="2014" name="Pediatr. Rheumatol. Online J.">
        <title>A de novo nonsense mutation in the tyrosine kinase lyn in a patient with an early onset autoinflammatory phenotype.</title>
        <authorList>
            <person name="De Jesus A.A."/>
            <person name="Montealegre G."/>
            <person name="Liu Y."/>
            <person name="Marrero B."/>
            <person name="Kuehn H."/>
            <person name="Calvo K."/>
            <person name="Rosenzweig S."/>
            <person name="Fleisher T."/>
            <person name="Chyi-Chia Lee R."/>
            <person name="Brundidge A."/>
            <person name="Chapelle D."/>
            <person name="Huang Y."/>
            <person name="Brooks S."/>
            <person name="Moir S."/>
            <person name="Meffre E."/>
            <person name="Merchant M."/>
            <person name="Deng Z."/>
            <person name="Goldbach-Mansky R."/>
        </authorList>
    </citation>
    <scope>INVOLVEMENT IN SAIDV</scope>
    <scope>VARIANT SAIDV 508-TYR--PRO-512 DEL</scope>
</reference>
<reference key="68">
    <citation type="journal article" date="2023" name="Arthritis Rheumatol.">
        <title>De Novo Gain-Of-Function Variations in LYN Associated With an Early-Onset Systemic Autoinflammatory Disorder.</title>
        <authorList>
            <person name="Louvrier C."/>
            <person name="El Khouri E."/>
            <person name="Grall Lerosey M."/>
            <person name="Quartier P."/>
            <person name="Guerrot A.M."/>
            <person name="Bader Meunier B."/>
            <person name="Chican J."/>
            <person name="Mohammad M."/>
            <person name="Assrawi E."/>
            <person name="Daskalopoulou A."/>
            <person name="Arenas Garcia A."/>
            <person name="Copin B."/>
            <person name="Piterboth W."/>
            <person name="Dastot Le Moal F."/>
            <person name="Karabina S.A."/>
            <person name="Amselem S."/>
            <person name="Giurgea I."/>
        </authorList>
    </citation>
    <scope>VARIANT SAIDV HIS-508</scope>
    <scope>CHARACTERIZATION OF VARIANTS SAIDV 508-TYR--PRO-512 DEL; HIS-508 AND PHE-508</scope>
    <scope>FUNCTION</scope>
</reference>
<reference key="69">
    <citation type="journal article" date="2023" name="Nat. Commun.">
        <title>Constitutively active Lyn kinase causes a cutaneous small vessel vasculitis and liver fibrosis syndrome.</title>
        <authorList>
            <person name="de Jesus A.A."/>
            <person name="Chen G."/>
            <person name="Yang D."/>
            <person name="Brdicka T."/>
            <person name="Ruth N.M."/>
            <person name="Bennin D."/>
            <person name="Cebecauerova D."/>
            <person name="Malcova H."/>
            <person name="Freeman H."/>
            <person name="Martin N."/>
            <person name="Svojgr K."/>
            <person name="Passo M.H."/>
            <person name="Bhuyan F."/>
            <person name="Alehashemi S."/>
            <person name="Rastegar A.T."/>
            <person name="Uss K."/>
            <person name="Kardava L."/>
            <person name="Marrero B."/>
            <person name="Duric I."/>
            <person name="Omoyinmi E."/>
            <person name="Peldova P."/>
            <person name="Lee C.R."/>
            <person name="Kleiner D.E."/>
            <person name="Hadigan C.M."/>
            <person name="Hewitt S.M."/>
            <person name="Pittaluga S."/>
            <person name="Carmona-Rivera C."/>
            <person name="Calvo K.R."/>
            <person name="Shah N."/>
            <person name="Balascakova M."/>
            <person name="Fink D.L."/>
            <person name="Kotalova R."/>
            <person name="Parackova Z."/>
            <person name="Peterkova L."/>
            <person name="Kuzilkova D."/>
            <person name="Campr V."/>
            <person name="Sramkova L."/>
            <person name="Biancotto A."/>
            <person name="Brooks S.R."/>
            <person name="Manes C."/>
            <person name="Meffre E."/>
            <person name="Harper R.L."/>
            <person name="Kuehn H."/>
            <person name="Kaplan M.J."/>
            <person name="Brogan P."/>
            <person name="Rosenzweig S.D."/>
            <person name="Merchant M."/>
            <person name="Deng Z."/>
            <person name="Huttenlocher A."/>
            <person name="Moir S.L."/>
            <person name="Kuhns D.B."/>
            <person name="Boehm M."/>
            <person name="Skvarova Kramarzova K."/>
            <person name="Goldbach-Mansky R."/>
        </authorList>
    </citation>
    <scope>VARIANTS SAIDV 507-GLN--PRO-512 DEL; 508-TYR--PRO-512 DEL AND PHE-508</scope>
    <scope>CHARACTERIZATION OF VARIANTS SAIDV 507-GLN--PRO-512 DEL; 508-TYR--PRO-512 DEL AND PHE-508</scope>
    <scope>FUNCTION</scope>
</reference>
<feature type="initiator methionine" description="Removed" evidence="42">
    <location>
        <position position="1"/>
    </location>
</feature>
<feature type="chain" id="PRO_0000088129" description="Tyrosine-protein kinase Lyn">
    <location>
        <begin position="2"/>
        <end position="512"/>
    </location>
</feature>
<feature type="domain" description="SH3" evidence="4">
    <location>
        <begin position="63"/>
        <end position="123"/>
    </location>
</feature>
<feature type="domain" description="SH2" evidence="3">
    <location>
        <begin position="129"/>
        <end position="226"/>
    </location>
</feature>
<feature type="domain" description="Protein kinase" evidence="2">
    <location>
        <begin position="247"/>
        <end position="501"/>
    </location>
</feature>
<feature type="region of interest" description="Disordered" evidence="6">
    <location>
        <begin position="1"/>
        <end position="62"/>
    </location>
</feature>
<feature type="active site" description="Proton acceptor" evidence="2 5">
    <location>
        <position position="367"/>
    </location>
</feature>
<feature type="binding site" evidence="2">
    <location>
        <begin position="253"/>
        <end position="261"/>
    </location>
    <ligand>
        <name>ATP</name>
        <dbReference type="ChEBI" id="CHEBI:30616"/>
    </ligand>
</feature>
<feature type="binding site" evidence="2">
    <location>
        <position position="275"/>
    </location>
    <ligand>
        <name>ATP</name>
        <dbReference type="ChEBI" id="CHEBI:30616"/>
    </ligand>
</feature>
<feature type="modified residue" description="Phosphoserine" evidence="60 61 63 64 65">
    <location>
        <position position="11"/>
    </location>
</feature>
<feature type="modified residue" description="Phosphoserine" evidence="60 61 62 63 64 65">
    <location>
        <position position="13"/>
    </location>
</feature>
<feature type="modified residue" description="Phosphotyrosine" evidence="32">
    <location>
        <position position="193"/>
    </location>
</feature>
<feature type="modified residue" description="Phosphoserine" evidence="61">
    <location>
        <position position="228"/>
    </location>
</feature>
<feature type="modified residue" description="Phosphotyrosine" evidence="61">
    <location>
        <position position="306"/>
    </location>
</feature>
<feature type="modified residue" description="Phosphotyrosine" evidence="61">
    <location>
        <position position="316"/>
    </location>
</feature>
<feature type="modified residue" description="Phosphotyrosine; by autocatalysis" evidence="30 49">
    <location>
        <position position="397"/>
    </location>
</feature>
<feature type="modified residue" description="Phosphotyrosine" evidence="32">
    <location>
        <position position="460"/>
    </location>
</feature>
<feature type="modified residue" description="Phosphotyrosine" evidence="60 61">
    <location>
        <position position="473"/>
    </location>
</feature>
<feature type="modified residue" description="Phosphotyrosine; by autocatalysis, CSK and MATK" evidence="30 49 52 59 60 61">
    <location>
        <position position="508"/>
    </location>
</feature>
<feature type="lipid moiety-binding region" description="N-myristoyl glycine" evidence="42 58">
    <location>
        <position position="2"/>
    </location>
</feature>
<feature type="lipid moiety-binding region" description="S-palmitoyl cysteine" evidence="58">
    <location>
        <position position="3"/>
    </location>
</feature>
<feature type="splice variant" id="VSP_005002" description="In isoform 2." evidence="56">
    <location>
        <begin position="23"/>
        <end position="43"/>
    </location>
</feature>
<feature type="sequence variant" id="VAR_041737" description="In a breast pleomorphic lobular carcinoma sample; somatic mutation." evidence="26">
    <original>D</original>
    <variation>Y</variation>
    <location>
        <position position="385"/>
    </location>
</feature>
<feature type="sequence variant" id="VAR_088619" description="In SAIDV; pathogenic; increased kinase activity due to loss of autoinhibition resulting in constitutive activation; loss of Y-508 phosphorylation; increased Y-397 phosphorylation." evidence="45">
    <location>
        <begin position="507"/>
        <end position="512"/>
    </location>
</feature>
<feature type="sequence variant" id="VAR_088620" description="In SAIDV; pathogenic; increased kinase activity due to loss of autoinhibition resulting in constitutive activation; loss of Y-508 phosphorylation; increased Y-397 phosphorylation." evidence="44 45 55">
    <location>
        <begin position="508"/>
        <end position="512"/>
    </location>
</feature>
<feature type="sequence variant" id="VAR_088621" description="In SAIDV; pathogenic; increased kinase activity due to loss of autoinhibition resulting in constitutive activation; loss of Y-508 phosphorylation; increased Y-397 phosphorylation." evidence="24 44 45">
    <original>Y</original>
    <variation>F</variation>
    <location>
        <position position="508"/>
    </location>
</feature>
<feature type="sequence variant" id="VAR_088622" description="In SAIDV; pathogenic; increased kinase activity due to loss of autoinhibition resulting in constitutive activation; loss of Y-508 phosphorylation; increased Y-397 phosphorylation." evidence="44">
    <original>Y</original>
    <variation>H</variation>
    <location>
        <position position="508"/>
    </location>
</feature>
<feature type="mutagenesis site" description="Loss of localization to the cell membrane; when associated with A-3." evidence="34">
    <original>G</original>
    <variation>A</variation>
    <location>
        <position position="2"/>
    </location>
</feature>
<feature type="mutagenesis site" description="Loss of localization to the cell membrane; when associated with A-2." evidence="34">
    <original>C</original>
    <variation>A</variation>
    <location>
        <position position="3"/>
    </location>
</feature>
<feature type="mutagenesis site" description="Loss of activity and no effect on localization to the cell membrane. Abundant localization in the nucleus; when associated with A-2 and A-3." evidence="12 13 19 34">
    <original>K</original>
    <variation>A</variation>
    <location>
        <position position="275"/>
    </location>
</feature>
<feature type="mutagenesis site" description="Loss of kinase activity." evidence="12 13 19 34">
    <original>K</original>
    <variation>L</variation>
    <variation>R</variation>
    <location>
        <position position="275"/>
    </location>
</feature>
<feature type="mutagenesis site" description="Impedes the trafficking from the Golgi apparatus toward the cell membrane; when associated with A-353; A-498 and A-499." evidence="19">
    <original>D</original>
    <variation>A</variation>
    <location>
        <position position="346"/>
    </location>
</feature>
<feature type="mutagenesis site" description="Impedes the trafficking from the Golgi apparatus toward the cell membrane; when associated with A-346; A-498 and A-499." evidence="19">
    <original>E</original>
    <variation>A</variation>
    <location>
        <position position="353"/>
    </location>
</feature>
<feature type="mutagenesis site" description="Strongly reduced kinase activity." evidence="24">
    <original>Y</original>
    <variation>F</variation>
    <location>
        <position position="397"/>
    </location>
</feature>
<feature type="mutagenesis site" description="Impedes the trafficking from the Golgi apparatus toward the cell membrane; when associated with A-346; A-353 and A-499." evidence="19">
    <original>D</original>
    <variation>A</variation>
    <location>
        <position position="498"/>
    </location>
</feature>
<feature type="mutagenesis site" description="Impedes the trafficking from the Golgi apparatus toward the cell membrane; when associated with A-346; A-353 and A-498." evidence="19">
    <original>D</original>
    <variation>A</variation>
    <location>
        <position position="499"/>
    </location>
</feature>
<feature type="strand" evidence="68">
    <location>
        <begin position="67"/>
        <end position="72"/>
    </location>
</feature>
<feature type="strand" evidence="66">
    <location>
        <begin position="78"/>
        <end position="80"/>
    </location>
</feature>
<feature type="strand" evidence="68">
    <location>
        <begin position="89"/>
        <end position="96"/>
    </location>
</feature>
<feature type="strand" evidence="68">
    <location>
        <begin position="99"/>
        <end position="104"/>
    </location>
</feature>
<feature type="turn" evidence="68">
    <location>
        <begin position="105"/>
        <end position="107"/>
    </location>
</feature>
<feature type="strand" evidence="68">
    <location>
        <begin position="110"/>
        <end position="114"/>
    </location>
</feature>
<feature type="helix" evidence="68">
    <location>
        <begin position="115"/>
        <end position="117"/>
    </location>
</feature>
<feature type="strand" evidence="68">
    <location>
        <begin position="118"/>
        <end position="121"/>
    </location>
</feature>
<feature type="helix" evidence="67">
    <location>
        <begin position="244"/>
        <end position="246"/>
    </location>
</feature>
<feature type="strand" evidence="67">
    <location>
        <begin position="247"/>
        <end position="255"/>
    </location>
</feature>
<feature type="strand" evidence="67">
    <location>
        <begin position="260"/>
        <end position="266"/>
    </location>
</feature>
<feature type="turn" evidence="67">
    <location>
        <begin position="267"/>
        <end position="269"/>
    </location>
</feature>
<feature type="strand" evidence="67">
    <location>
        <begin position="270"/>
        <end position="277"/>
    </location>
</feature>
<feature type="helix" evidence="67">
    <location>
        <begin position="284"/>
        <end position="296"/>
    </location>
</feature>
<feature type="strand" evidence="67">
    <location>
        <begin position="305"/>
        <end position="309"/>
    </location>
</feature>
<feature type="strand" evidence="67">
    <location>
        <begin position="311"/>
        <end position="320"/>
    </location>
</feature>
<feature type="helix" evidence="67">
    <location>
        <begin position="327"/>
        <end position="332"/>
    </location>
</feature>
<feature type="helix" evidence="67">
    <location>
        <begin position="334"/>
        <end position="338"/>
    </location>
</feature>
<feature type="helix" evidence="67">
    <location>
        <begin position="341"/>
        <end position="360"/>
    </location>
</feature>
<feature type="helix" evidence="67">
    <location>
        <begin position="370"/>
        <end position="372"/>
    </location>
</feature>
<feature type="strand" evidence="67">
    <location>
        <begin position="373"/>
        <end position="375"/>
    </location>
</feature>
<feature type="strand" evidence="67">
    <location>
        <begin position="381"/>
        <end position="383"/>
    </location>
</feature>
<feature type="helix" evidence="67">
    <location>
        <begin position="407"/>
        <end position="409"/>
    </location>
</feature>
<feature type="helix" evidence="67">
    <location>
        <begin position="412"/>
        <end position="417"/>
    </location>
</feature>
<feature type="helix" evidence="67">
    <location>
        <begin position="422"/>
        <end position="437"/>
    </location>
</feature>
<feature type="helix" evidence="67">
    <location>
        <begin position="449"/>
        <end position="457"/>
    </location>
</feature>
<feature type="strand" evidence="67">
    <location>
        <begin position="466"/>
        <end position="468"/>
    </location>
</feature>
<feature type="helix" evidence="67">
    <location>
        <begin position="470"/>
        <end position="479"/>
    </location>
</feature>
<feature type="helix" evidence="67">
    <location>
        <begin position="484"/>
        <end position="486"/>
    </location>
</feature>
<feature type="helix" evidence="67">
    <location>
        <begin position="490"/>
        <end position="501"/>
    </location>
</feature>
<organism>
    <name type="scientific">Homo sapiens</name>
    <name type="common">Human</name>
    <dbReference type="NCBI Taxonomy" id="9606"/>
    <lineage>
        <taxon>Eukaryota</taxon>
        <taxon>Metazoa</taxon>
        <taxon>Chordata</taxon>
        <taxon>Craniata</taxon>
        <taxon>Vertebrata</taxon>
        <taxon>Euteleostomi</taxon>
        <taxon>Mammalia</taxon>
        <taxon>Eutheria</taxon>
        <taxon>Euarchontoglires</taxon>
        <taxon>Primates</taxon>
        <taxon>Haplorrhini</taxon>
        <taxon>Catarrhini</taxon>
        <taxon>Hominidae</taxon>
        <taxon>Homo</taxon>
    </lineage>
</organism>
<sequence>MGCIKSKGKDSLSDDGVDLKTQPVRNTERTIYVRDPTSNKQQRPVPESQLLPGQRFQTKDPEEQGDIVVALYPYDGIHPDDLSFKKGEKMKVLEEHGEWWKAKSLLTKKEGFIPSNYVAKLNTLETEEWFFKDITRKDAERQLLAPGNSAGAFLIRESETLKGSFSLSVRDFDPVHGDVIKHYKIRSLDNGGYYISPRITFPCISDMIKHYQKQADGLCRRLEKACISPKPQKPWDKDAWEIPRESIKLVKRLGAGQFGEVWMGYYNNSTKVAVKTLKPGTMSVQAFLEEANLMKTLQHDKLVRLYAVVTREEPIYIITEYMAKGSLLDFLKSDEGGKVLLPKLIDFSAQIAEGMAYIERKNYIHRDLRAANVLVSESLMCKIADFGLARVIEDNEYTAREGAKFPIKWTAPEAINFGCFTIKSDVWSFGILLYEIVTYGKIPYPGRTNADVMTALSQGYRMPRVENCPDELYDIMKMCWKEKAEERPTFDYLQSVLDDFYTATEGQYQQQP</sequence>
<proteinExistence type="evidence at protein level"/>
<protein>
    <recommendedName>
        <fullName>Tyrosine-protein kinase Lyn</fullName>
        <ecNumber>2.7.10.2</ecNumber>
    </recommendedName>
    <alternativeName>
        <fullName>Lck/Yes-related novel protein tyrosine kinase</fullName>
    </alternativeName>
    <alternativeName>
        <fullName>V-yes-1 Yamaguchi sarcoma viral related oncogene homolog</fullName>
    </alternativeName>
    <alternativeName>
        <fullName>p53Lyn</fullName>
    </alternativeName>
    <alternativeName>
        <fullName>p56Lyn</fullName>
    </alternativeName>
</protein>
<accession>P07948</accession>
<accession>A0AVQ5</accession>
<keyword id="KW-0002">3D-structure</keyword>
<keyword id="KW-1064">Adaptive immunity</keyword>
<keyword id="KW-0025">Alternative splicing</keyword>
<keyword id="KW-0067">ATP-binding</keyword>
<keyword id="KW-1003">Cell membrane</keyword>
<keyword id="KW-0963">Cytoplasm</keyword>
<keyword id="KW-0225">Disease variant</keyword>
<keyword id="KW-0333">Golgi apparatus</keyword>
<keyword id="KW-0945">Host-virus interaction</keyword>
<keyword id="KW-0391">Immunity</keyword>
<keyword id="KW-0395">Inflammatory response</keyword>
<keyword id="KW-0399">Innate immunity</keyword>
<keyword id="KW-0418">Kinase</keyword>
<keyword id="KW-0449">Lipoprotein</keyword>
<keyword id="KW-0472">Membrane</keyword>
<keyword id="KW-0519">Myristate</keyword>
<keyword id="KW-0547">Nucleotide-binding</keyword>
<keyword id="KW-0539">Nucleus</keyword>
<keyword id="KW-0564">Palmitate</keyword>
<keyword id="KW-0597">Phosphoprotein</keyword>
<keyword id="KW-1267">Proteomics identification</keyword>
<keyword id="KW-0656">Proto-oncogene</keyword>
<keyword id="KW-1185">Reference proteome</keyword>
<keyword id="KW-0727">SH2 domain</keyword>
<keyword id="KW-0728">SH3 domain</keyword>
<keyword id="KW-0808">Transferase</keyword>
<keyword id="KW-0829">Tyrosine-protein kinase</keyword>
<keyword id="KW-0832">Ubl conjugation</keyword>